<dbReference type="EC" id="3.6.5.5" evidence="36"/>
<dbReference type="EMBL" id="L36983">
    <property type="protein sequence ID" value="AAA88025.1"/>
    <property type="molecule type" value="mRNA"/>
</dbReference>
<dbReference type="EMBL" id="AK289831">
    <property type="protein sequence ID" value="BAF82520.1"/>
    <property type="molecule type" value="mRNA"/>
</dbReference>
<dbReference type="EMBL" id="AK312260">
    <property type="status" value="NOT_ANNOTATED_CDS"/>
    <property type="molecule type" value="mRNA"/>
</dbReference>
<dbReference type="EMBL" id="AC007229">
    <property type="protein sequence ID" value="AAD23604.1"/>
    <property type="molecule type" value="Genomic_DNA"/>
</dbReference>
<dbReference type="EMBL" id="AC011475">
    <property type="status" value="NOT_ANNOTATED_CDS"/>
    <property type="molecule type" value="Genomic_DNA"/>
</dbReference>
<dbReference type="EMBL" id="AC011552">
    <property type="status" value="NOT_ANNOTATED_CDS"/>
    <property type="molecule type" value="Genomic_DNA"/>
</dbReference>
<dbReference type="EMBL" id="AC011554">
    <property type="status" value="NOT_ANNOTATED_CDS"/>
    <property type="molecule type" value="Genomic_DNA"/>
</dbReference>
<dbReference type="EMBL" id="AC112707">
    <property type="status" value="NOT_ANNOTATED_CDS"/>
    <property type="molecule type" value="Genomic_DNA"/>
</dbReference>
<dbReference type="EMBL" id="BC039596">
    <property type="protein sequence ID" value="AAH39596.1"/>
    <property type="molecule type" value="mRNA"/>
</dbReference>
<dbReference type="EMBL" id="BC054501">
    <property type="protein sequence ID" value="AAH54501.1"/>
    <property type="molecule type" value="mRNA"/>
</dbReference>
<dbReference type="CCDS" id="CCDS32907.1">
    <molecule id="P50570-2"/>
</dbReference>
<dbReference type="CCDS" id="CCDS32908.1">
    <molecule id="P50570-3"/>
</dbReference>
<dbReference type="CCDS" id="CCDS45968.1">
    <molecule id="P50570-1"/>
</dbReference>
<dbReference type="CCDS" id="CCDS45969.1">
    <molecule id="P50570-4"/>
</dbReference>
<dbReference type="CCDS" id="CCDS59351.1">
    <molecule id="P50570-5"/>
</dbReference>
<dbReference type="PIR" id="JC4305">
    <property type="entry name" value="JC4305"/>
</dbReference>
<dbReference type="RefSeq" id="NP_001005360.1">
    <molecule id="P50570-1"/>
    <property type="nucleotide sequence ID" value="NM_001005360.3"/>
</dbReference>
<dbReference type="RefSeq" id="NP_001005361.1">
    <molecule id="P50570-4"/>
    <property type="nucleotide sequence ID" value="NM_001005361.3"/>
</dbReference>
<dbReference type="RefSeq" id="NP_001005362.1">
    <molecule id="P50570-3"/>
    <property type="nucleotide sequence ID" value="NM_001005362.3"/>
</dbReference>
<dbReference type="RefSeq" id="NP_001177645.1">
    <molecule id="P50570-5"/>
    <property type="nucleotide sequence ID" value="NM_001190716.2"/>
</dbReference>
<dbReference type="RefSeq" id="NP_004936.2">
    <molecule id="P50570-2"/>
    <property type="nucleotide sequence ID" value="NM_004945.4"/>
</dbReference>
<dbReference type="PDB" id="2YS1">
    <property type="method" value="NMR"/>
    <property type="chains" value="A=520-625"/>
</dbReference>
<dbReference type="PDBsum" id="2YS1"/>
<dbReference type="BMRB" id="P50570"/>
<dbReference type="SMR" id="P50570"/>
<dbReference type="BioGRID" id="108122">
    <property type="interactions" value="290"/>
</dbReference>
<dbReference type="CORUM" id="P50570"/>
<dbReference type="DIP" id="DIP-31244N"/>
<dbReference type="ELM" id="P50570"/>
<dbReference type="FunCoup" id="P50570">
    <property type="interactions" value="3045"/>
</dbReference>
<dbReference type="IntAct" id="P50570">
    <property type="interactions" value="300"/>
</dbReference>
<dbReference type="MINT" id="P50570"/>
<dbReference type="STRING" id="9606.ENSP00000373905"/>
<dbReference type="BindingDB" id="P50570"/>
<dbReference type="ChEMBL" id="CHEMBL5812"/>
<dbReference type="MoonDB" id="P50570">
    <property type="type" value="Curated"/>
</dbReference>
<dbReference type="TCDB" id="1.R.1.1.1">
    <property type="family name" value="the membrane contact site (mcs) family"/>
</dbReference>
<dbReference type="TCDB" id="8.A.34.1.4">
    <property type="family name" value="the endophilin (endophilin) family"/>
</dbReference>
<dbReference type="GlyGen" id="P50570">
    <property type="glycosylation" value="5 sites, 1 N-linked glycan (1 site), 1 O-linked glycan (1 site)"/>
</dbReference>
<dbReference type="iPTMnet" id="P50570"/>
<dbReference type="MetOSite" id="P50570"/>
<dbReference type="PhosphoSitePlus" id="P50570"/>
<dbReference type="SwissPalm" id="P50570"/>
<dbReference type="BioMuta" id="DNM2"/>
<dbReference type="DMDM" id="47117856"/>
<dbReference type="jPOST" id="P50570"/>
<dbReference type="MassIVE" id="P50570"/>
<dbReference type="PaxDb" id="9606-ENSP00000373905"/>
<dbReference type="PeptideAtlas" id="P50570"/>
<dbReference type="ProteomicsDB" id="1845"/>
<dbReference type="ProteomicsDB" id="19939"/>
<dbReference type="ProteomicsDB" id="56250">
    <molecule id="P50570-1"/>
</dbReference>
<dbReference type="ProteomicsDB" id="56251">
    <molecule id="P50570-2"/>
</dbReference>
<dbReference type="Pumba" id="P50570"/>
<dbReference type="Antibodypedia" id="25505">
    <property type="antibodies" value="258 antibodies from 34 providers"/>
</dbReference>
<dbReference type="DNASU" id="1785"/>
<dbReference type="Ensembl" id="ENST00000355667.11">
    <molecule id="P50570-1"/>
    <property type="protein sequence ID" value="ENSP00000347890.6"/>
    <property type="gene ID" value="ENSG00000079805.19"/>
</dbReference>
<dbReference type="Ensembl" id="ENST00000359692.10">
    <molecule id="P50570-2"/>
    <property type="protein sequence ID" value="ENSP00000352721.6"/>
    <property type="gene ID" value="ENSG00000079805.19"/>
</dbReference>
<dbReference type="Ensembl" id="ENST00000389253.9">
    <molecule id="P50570-4"/>
    <property type="protein sequence ID" value="ENSP00000373905.4"/>
    <property type="gene ID" value="ENSG00000079805.19"/>
</dbReference>
<dbReference type="Ensembl" id="ENST00000408974.8">
    <molecule id="P50570-3"/>
    <property type="protein sequence ID" value="ENSP00000386192.3"/>
    <property type="gene ID" value="ENSG00000079805.19"/>
</dbReference>
<dbReference type="Ensembl" id="ENST00000585892.5">
    <molecule id="P50570-5"/>
    <property type="protein sequence ID" value="ENSP00000468734.1"/>
    <property type="gene ID" value="ENSG00000079805.19"/>
</dbReference>
<dbReference type="GeneID" id="1785"/>
<dbReference type="KEGG" id="hsa:1785"/>
<dbReference type="MANE-Select" id="ENST00000389253.9">
    <molecule id="P50570-4"/>
    <property type="protein sequence ID" value="ENSP00000373905.4"/>
    <property type="RefSeq nucleotide sequence ID" value="NM_001005361.3"/>
    <property type="RefSeq protein sequence ID" value="NP_001005361.1"/>
</dbReference>
<dbReference type="UCSC" id="uc002mps.3">
    <molecule id="P50570-1"/>
    <property type="organism name" value="human"/>
</dbReference>
<dbReference type="AGR" id="HGNC:2974"/>
<dbReference type="CTD" id="1785"/>
<dbReference type="DisGeNET" id="1785"/>
<dbReference type="GeneCards" id="DNM2"/>
<dbReference type="HGNC" id="HGNC:2974">
    <property type="gene designation" value="DNM2"/>
</dbReference>
<dbReference type="HPA" id="ENSG00000079805">
    <property type="expression patterns" value="Low tissue specificity"/>
</dbReference>
<dbReference type="MalaCards" id="DNM2"/>
<dbReference type="MIM" id="160150">
    <property type="type" value="phenotype"/>
</dbReference>
<dbReference type="MIM" id="602378">
    <property type="type" value="gene"/>
</dbReference>
<dbReference type="MIM" id="606482">
    <property type="type" value="phenotype"/>
</dbReference>
<dbReference type="MIM" id="615368">
    <property type="type" value="phenotype"/>
</dbReference>
<dbReference type="neXtProt" id="NX_P50570"/>
<dbReference type="OpenTargets" id="ENSG00000079805"/>
<dbReference type="Orphanet" id="169189">
    <property type="disease" value="Autosomal dominant centronuclear myopathy"/>
</dbReference>
<dbReference type="Orphanet" id="228179">
    <property type="disease" value="Autosomal dominant Charcot-Marie-Tooth disease type 2M"/>
</dbReference>
<dbReference type="Orphanet" id="100044">
    <property type="disease" value="Autosomal dominant intermediate Charcot-Marie-Tooth disease type B"/>
</dbReference>
<dbReference type="Orphanet" id="363409">
    <property type="disease" value="Fetal akinesia-cerebral and retinal hemorrhage syndrome"/>
</dbReference>
<dbReference type="PharmGKB" id="PA27442"/>
<dbReference type="VEuPathDB" id="HostDB:ENSG00000079805"/>
<dbReference type="eggNOG" id="KOG0446">
    <property type="taxonomic scope" value="Eukaryota"/>
</dbReference>
<dbReference type="GeneTree" id="ENSGT00940000155764"/>
<dbReference type="HOGENOM" id="CLU_008964_1_1_1"/>
<dbReference type="InParanoid" id="P50570"/>
<dbReference type="OMA" id="YMNTNHP"/>
<dbReference type="OrthoDB" id="5061070at2759"/>
<dbReference type="PAN-GO" id="P50570">
    <property type="GO annotations" value="8 GO annotations based on evolutionary models"/>
</dbReference>
<dbReference type="PhylomeDB" id="P50570"/>
<dbReference type="TreeFam" id="TF300362"/>
<dbReference type="BRENDA" id="3.6.5.5">
    <property type="organism ID" value="2681"/>
</dbReference>
<dbReference type="PathwayCommons" id="P50570"/>
<dbReference type="Reactome" id="R-HSA-166016">
    <property type="pathway name" value="Toll Like Receptor 4 (TLR4) Cascade"/>
</dbReference>
<dbReference type="Reactome" id="R-HSA-177504">
    <property type="pathway name" value="Retrograde neurotrophin signalling"/>
</dbReference>
<dbReference type="Reactome" id="R-HSA-190873">
    <property type="pathway name" value="Gap junction degradation"/>
</dbReference>
<dbReference type="Reactome" id="R-HSA-196025">
    <property type="pathway name" value="Formation of annular gap junctions"/>
</dbReference>
<dbReference type="Reactome" id="R-HSA-203641">
    <property type="pathway name" value="NOSTRIN mediated eNOS trafficking"/>
</dbReference>
<dbReference type="Reactome" id="R-HSA-2132295">
    <property type="pathway name" value="MHC class II antigen presentation"/>
</dbReference>
<dbReference type="Reactome" id="R-HSA-432720">
    <property type="pathway name" value="Lysosome Vesicle Biogenesis"/>
</dbReference>
<dbReference type="Reactome" id="R-HSA-432722">
    <property type="pathway name" value="Golgi Associated Vesicle Biogenesis"/>
</dbReference>
<dbReference type="Reactome" id="R-HSA-437239">
    <property type="pathway name" value="Recycling pathway of L1"/>
</dbReference>
<dbReference type="Reactome" id="R-HSA-8856828">
    <property type="pathway name" value="Clathrin-mediated endocytosis"/>
</dbReference>
<dbReference type="Reactome" id="R-HSA-9031628">
    <property type="pathway name" value="NGF-stimulated transcription"/>
</dbReference>
<dbReference type="SignaLink" id="P50570"/>
<dbReference type="SIGNOR" id="P50570"/>
<dbReference type="BioGRID-ORCS" id="1785">
    <property type="hits" value="748 hits in 1175 CRISPR screens"/>
</dbReference>
<dbReference type="CD-CODE" id="8C2F96ED">
    <property type="entry name" value="Centrosome"/>
</dbReference>
<dbReference type="CD-CODE" id="FB4E32DD">
    <property type="entry name" value="Presynaptic clusters and postsynaptic densities"/>
</dbReference>
<dbReference type="ChiTaRS" id="DNM2">
    <property type="organism name" value="human"/>
</dbReference>
<dbReference type="EvolutionaryTrace" id="P50570"/>
<dbReference type="GeneWiki" id="DNM2"/>
<dbReference type="GenomeRNAi" id="1785"/>
<dbReference type="Pharos" id="P50570">
    <property type="development level" value="Tchem"/>
</dbReference>
<dbReference type="PRO" id="PR:P50570"/>
<dbReference type="Proteomes" id="UP000005640">
    <property type="component" value="Chromosome 19"/>
</dbReference>
<dbReference type="RNAct" id="P50570">
    <property type="molecule type" value="protein"/>
</dbReference>
<dbReference type="Bgee" id="ENSG00000079805">
    <property type="expression patterns" value="Expressed in metanephros cortex and 154 other cell types or tissues"/>
</dbReference>
<dbReference type="ExpressionAtlas" id="P50570">
    <property type="expression patterns" value="baseline and differential"/>
</dbReference>
<dbReference type="GO" id="GO:0005814">
    <property type="term" value="C:centriole"/>
    <property type="evidence" value="ECO:0000314"/>
    <property type="project" value="UniProtKB"/>
</dbReference>
<dbReference type="GO" id="GO:0005813">
    <property type="term" value="C:centrosome"/>
    <property type="evidence" value="ECO:0000314"/>
    <property type="project" value="UniProtKB"/>
</dbReference>
<dbReference type="GO" id="GO:0005905">
    <property type="term" value="C:clathrin-coated pit"/>
    <property type="evidence" value="ECO:0000250"/>
    <property type="project" value="UniProtKB"/>
</dbReference>
<dbReference type="GO" id="GO:0030136">
    <property type="term" value="C:clathrin-coated vesicle"/>
    <property type="evidence" value="ECO:0000314"/>
    <property type="project" value="UniProtKB"/>
</dbReference>
<dbReference type="GO" id="GO:0005737">
    <property type="term" value="C:cytoplasm"/>
    <property type="evidence" value="ECO:0000318"/>
    <property type="project" value="GO_Central"/>
</dbReference>
<dbReference type="GO" id="GO:0005829">
    <property type="term" value="C:cytosol"/>
    <property type="evidence" value="ECO:0000314"/>
    <property type="project" value="HPA"/>
</dbReference>
<dbReference type="GO" id="GO:0030666">
    <property type="term" value="C:endocytic vesicle membrane"/>
    <property type="evidence" value="ECO:0000304"/>
    <property type="project" value="Reactome"/>
</dbReference>
<dbReference type="GO" id="GO:0005768">
    <property type="term" value="C:endosome"/>
    <property type="evidence" value="ECO:0000314"/>
    <property type="project" value="UniProtKB"/>
</dbReference>
<dbReference type="GO" id="GO:0070062">
    <property type="term" value="C:extracellular exosome"/>
    <property type="evidence" value="ECO:0007005"/>
    <property type="project" value="UniProtKB"/>
</dbReference>
<dbReference type="GO" id="GO:0005925">
    <property type="term" value="C:focal adhesion"/>
    <property type="evidence" value="ECO:0007005"/>
    <property type="project" value="UniProtKB"/>
</dbReference>
<dbReference type="GO" id="GO:0005794">
    <property type="term" value="C:Golgi apparatus"/>
    <property type="evidence" value="ECO:0000314"/>
    <property type="project" value="HPA"/>
</dbReference>
<dbReference type="GO" id="GO:0000139">
    <property type="term" value="C:Golgi membrane"/>
    <property type="evidence" value="ECO:0000304"/>
    <property type="project" value="Reactome"/>
</dbReference>
<dbReference type="GO" id="GO:0005874">
    <property type="term" value="C:microtubule"/>
    <property type="evidence" value="ECO:0000314"/>
    <property type="project" value="UniProtKB"/>
</dbReference>
<dbReference type="GO" id="GO:0030496">
    <property type="term" value="C:midbody"/>
    <property type="evidence" value="ECO:0007669"/>
    <property type="project" value="UniProtKB-SubCell"/>
</dbReference>
<dbReference type="GO" id="GO:0043005">
    <property type="term" value="C:neuron projection"/>
    <property type="evidence" value="ECO:0000250"/>
    <property type="project" value="UniProtKB"/>
</dbReference>
<dbReference type="GO" id="GO:0001891">
    <property type="term" value="C:phagocytic cup"/>
    <property type="evidence" value="ECO:0007669"/>
    <property type="project" value="UniProtKB-SubCell"/>
</dbReference>
<dbReference type="GO" id="GO:0030670">
    <property type="term" value="C:phagocytic vesicle membrane"/>
    <property type="evidence" value="ECO:0007669"/>
    <property type="project" value="UniProtKB-SubCell"/>
</dbReference>
<dbReference type="GO" id="GO:0005886">
    <property type="term" value="C:plasma membrane"/>
    <property type="evidence" value="ECO:0000318"/>
    <property type="project" value="GO_Central"/>
</dbReference>
<dbReference type="GO" id="GO:0002102">
    <property type="term" value="C:podosome"/>
    <property type="evidence" value="ECO:0007669"/>
    <property type="project" value="UniProtKB-SubCell"/>
</dbReference>
<dbReference type="GO" id="GO:0014069">
    <property type="term" value="C:postsynaptic density"/>
    <property type="evidence" value="ECO:0000250"/>
    <property type="project" value="UniProtKB"/>
</dbReference>
<dbReference type="GO" id="GO:0045211">
    <property type="term" value="C:postsynaptic membrane"/>
    <property type="evidence" value="ECO:0000314"/>
    <property type="project" value="UniProtKB"/>
</dbReference>
<dbReference type="GO" id="GO:0098793">
    <property type="term" value="C:presynapse"/>
    <property type="evidence" value="ECO:0007669"/>
    <property type="project" value="GOC"/>
</dbReference>
<dbReference type="GO" id="GO:0055037">
    <property type="term" value="C:recycling endosome"/>
    <property type="evidence" value="ECO:0000314"/>
    <property type="project" value="UniProtKB"/>
</dbReference>
<dbReference type="GO" id="GO:0045202">
    <property type="term" value="C:synapse"/>
    <property type="evidence" value="ECO:0000318"/>
    <property type="project" value="GO_Central"/>
</dbReference>
<dbReference type="GO" id="GO:0001931">
    <property type="term" value="C:uropod"/>
    <property type="evidence" value="ECO:0000314"/>
    <property type="project" value="UniProtKB"/>
</dbReference>
<dbReference type="GO" id="GO:0019899">
    <property type="term" value="F:enzyme binding"/>
    <property type="evidence" value="ECO:0000303"/>
    <property type="project" value="UniProtKB"/>
</dbReference>
<dbReference type="GO" id="GO:0005525">
    <property type="term" value="F:GTP binding"/>
    <property type="evidence" value="ECO:0000303"/>
    <property type="project" value="UniProtKB"/>
</dbReference>
<dbReference type="GO" id="GO:0003924">
    <property type="term" value="F:GTPase activity"/>
    <property type="evidence" value="ECO:0000314"/>
    <property type="project" value="UniProtKB"/>
</dbReference>
<dbReference type="GO" id="GO:0008017">
    <property type="term" value="F:microtubule binding"/>
    <property type="evidence" value="ECO:0000318"/>
    <property type="project" value="GO_Central"/>
</dbReference>
<dbReference type="GO" id="GO:0005546">
    <property type="term" value="F:phosphatidylinositol-4,5-bisphosphate binding"/>
    <property type="evidence" value="ECO:0000314"/>
    <property type="project" value="UniProtKB"/>
</dbReference>
<dbReference type="GO" id="GO:0017124">
    <property type="term" value="F:SH3 domain binding"/>
    <property type="evidence" value="ECO:0000314"/>
    <property type="project" value="UniProtKB"/>
</dbReference>
<dbReference type="GO" id="GO:0061572">
    <property type="term" value="P:actin filament bundle organization"/>
    <property type="evidence" value="ECO:0000315"/>
    <property type="project" value="UniProtKB"/>
</dbReference>
<dbReference type="GO" id="GO:0019886">
    <property type="term" value="P:antigen processing and presentation of exogenous peptide antigen via MHC class II"/>
    <property type="evidence" value="ECO:0000304"/>
    <property type="project" value="Reactome"/>
</dbReference>
<dbReference type="GO" id="GO:0006914">
    <property type="term" value="P:autophagy"/>
    <property type="evidence" value="ECO:0000314"/>
    <property type="project" value="UniProtKB"/>
</dbReference>
<dbReference type="GO" id="GO:0007098">
    <property type="term" value="P:centrosome cycle"/>
    <property type="evidence" value="ECO:0000250"/>
    <property type="project" value="UniProtKB"/>
</dbReference>
<dbReference type="GO" id="GO:0006897">
    <property type="term" value="P:endocytosis"/>
    <property type="evidence" value="ECO:0000314"/>
    <property type="project" value="UniProtKB"/>
</dbReference>
<dbReference type="GO" id="GO:0000086">
    <property type="term" value="P:G2/M transition of mitotic cell cycle"/>
    <property type="evidence" value="ECO:0000303"/>
    <property type="project" value="UniProtKB"/>
</dbReference>
<dbReference type="GO" id="GO:0061024">
    <property type="term" value="P:membrane organization"/>
    <property type="evidence" value="ECO:0000304"/>
    <property type="project" value="Reactome"/>
</dbReference>
<dbReference type="GO" id="GO:0097749">
    <property type="term" value="P:membrane tubulation"/>
    <property type="evidence" value="ECO:0000314"/>
    <property type="project" value="UniProtKB"/>
</dbReference>
<dbReference type="GO" id="GO:1903526">
    <property type="term" value="P:negative regulation of membrane tubulation"/>
    <property type="evidence" value="ECO:0000314"/>
    <property type="project" value="UniProtKB"/>
</dbReference>
<dbReference type="GO" id="GO:0048812">
    <property type="term" value="P:neuron projection morphogenesis"/>
    <property type="evidence" value="ECO:0000250"/>
    <property type="project" value="UniProtKB"/>
</dbReference>
<dbReference type="GO" id="GO:0006909">
    <property type="term" value="P:phagocytosis"/>
    <property type="evidence" value="ECO:0007669"/>
    <property type="project" value="UniProtKB-KW"/>
</dbReference>
<dbReference type="GO" id="GO:0043065">
    <property type="term" value="P:positive regulation of apoptotic process"/>
    <property type="evidence" value="ECO:0000303"/>
    <property type="project" value="UniProtKB"/>
</dbReference>
<dbReference type="GO" id="GO:0045893">
    <property type="term" value="P:positive regulation of DNA-templated transcription"/>
    <property type="evidence" value="ECO:0000303"/>
    <property type="project" value="UniProtKB"/>
</dbReference>
<dbReference type="GO" id="GO:0006892">
    <property type="term" value="P:post-Golgi vesicle-mediated transport"/>
    <property type="evidence" value="ECO:0000304"/>
    <property type="project" value="Reactome"/>
</dbReference>
<dbReference type="GO" id="GO:0051258">
    <property type="term" value="P:protein polymerization"/>
    <property type="evidence" value="ECO:0000314"/>
    <property type="project" value="UniProtKB"/>
</dbReference>
<dbReference type="GO" id="GO:0031623">
    <property type="term" value="P:receptor internalization"/>
    <property type="evidence" value="ECO:0000315"/>
    <property type="project" value="BHF-UCL"/>
</dbReference>
<dbReference type="GO" id="GO:0006898">
    <property type="term" value="P:receptor-mediated endocytosis"/>
    <property type="evidence" value="ECO:0000314"/>
    <property type="project" value="UniProtKB"/>
</dbReference>
<dbReference type="GO" id="GO:0030516">
    <property type="term" value="P:regulation of axon extension"/>
    <property type="evidence" value="ECO:0000250"/>
    <property type="project" value="UniProtKB"/>
</dbReference>
<dbReference type="GO" id="GO:0006355">
    <property type="term" value="P:regulation of DNA-templated transcription"/>
    <property type="evidence" value="ECO:0000303"/>
    <property type="project" value="UniProtKB"/>
</dbReference>
<dbReference type="GO" id="GO:0007165">
    <property type="term" value="P:signal transduction"/>
    <property type="evidence" value="ECO:0000303"/>
    <property type="project" value="UniProtKB"/>
</dbReference>
<dbReference type="GO" id="GO:0043149">
    <property type="term" value="P:stress fiber assembly"/>
    <property type="evidence" value="ECO:0000250"/>
    <property type="project" value="UniProtKB"/>
</dbReference>
<dbReference type="GO" id="GO:0016185">
    <property type="term" value="P:synaptic vesicle budding from presynaptic endocytic zone membrane"/>
    <property type="evidence" value="ECO:0000318"/>
    <property type="project" value="GO_Central"/>
</dbReference>
<dbReference type="GO" id="GO:0048489">
    <property type="term" value="P:synaptic vesicle transport"/>
    <property type="evidence" value="ECO:0000303"/>
    <property type="project" value="UniProtKB"/>
</dbReference>
<dbReference type="GO" id="GO:0033572">
    <property type="term" value="P:transferrin transport"/>
    <property type="evidence" value="ECO:0000315"/>
    <property type="project" value="BHF-UCL"/>
</dbReference>
<dbReference type="GO" id="GO:0099050">
    <property type="term" value="P:vesicle scission"/>
    <property type="evidence" value="ECO:0000314"/>
    <property type="project" value="UniProtKB"/>
</dbReference>
<dbReference type="CDD" id="cd08771">
    <property type="entry name" value="DLP_1"/>
    <property type="match status" value="1"/>
</dbReference>
<dbReference type="CDD" id="cd01256">
    <property type="entry name" value="PH_dynamin"/>
    <property type="match status" value="1"/>
</dbReference>
<dbReference type="FunFam" id="1.20.120.1240:FF:000019">
    <property type="entry name" value="Dynamin 2"/>
    <property type="match status" value="1"/>
</dbReference>
<dbReference type="FunFam" id="1.20.120.1240:FF:000014">
    <property type="entry name" value="Dynamin 2b"/>
    <property type="match status" value="1"/>
</dbReference>
<dbReference type="FunFam" id="2.30.29.30:FF:000010">
    <property type="entry name" value="dynamin-1 isoform X2"/>
    <property type="match status" value="1"/>
</dbReference>
<dbReference type="FunFam" id="3.40.50.300:FF:000045">
    <property type="entry name" value="dynamin-1 isoform X2"/>
    <property type="match status" value="1"/>
</dbReference>
<dbReference type="Gene3D" id="1.20.120.1240">
    <property type="entry name" value="Dynamin, middle domain"/>
    <property type="match status" value="1"/>
</dbReference>
<dbReference type="Gene3D" id="3.40.50.300">
    <property type="entry name" value="P-loop containing nucleotide triphosphate hydrolases"/>
    <property type="match status" value="1"/>
</dbReference>
<dbReference type="Gene3D" id="2.30.29.30">
    <property type="entry name" value="Pleckstrin-homology domain (PH domain)/Phosphotyrosine-binding domain (PTB)"/>
    <property type="match status" value="1"/>
</dbReference>
<dbReference type="InterPro" id="IPR022812">
    <property type="entry name" value="Dynamin"/>
</dbReference>
<dbReference type="InterPro" id="IPR001401">
    <property type="entry name" value="Dynamin_GTPase"/>
</dbReference>
<dbReference type="InterPro" id="IPR019762">
    <property type="entry name" value="Dynamin_GTPase_CS"/>
</dbReference>
<dbReference type="InterPro" id="IPR045063">
    <property type="entry name" value="Dynamin_N"/>
</dbReference>
<dbReference type="InterPro" id="IPR000375">
    <property type="entry name" value="Dynamin_stalk"/>
</dbReference>
<dbReference type="InterPro" id="IPR030381">
    <property type="entry name" value="G_DYNAMIN_dom"/>
</dbReference>
<dbReference type="InterPro" id="IPR003130">
    <property type="entry name" value="GED"/>
</dbReference>
<dbReference type="InterPro" id="IPR020850">
    <property type="entry name" value="GED_dom"/>
</dbReference>
<dbReference type="InterPro" id="IPR027417">
    <property type="entry name" value="P-loop_NTPase"/>
</dbReference>
<dbReference type="InterPro" id="IPR011993">
    <property type="entry name" value="PH-like_dom_sf"/>
</dbReference>
<dbReference type="InterPro" id="IPR001849">
    <property type="entry name" value="PH_domain"/>
</dbReference>
<dbReference type="PANTHER" id="PTHR11566">
    <property type="entry name" value="DYNAMIN"/>
    <property type="match status" value="1"/>
</dbReference>
<dbReference type="PANTHER" id="PTHR11566:SF23">
    <property type="entry name" value="DYNAMIN-2"/>
    <property type="match status" value="1"/>
</dbReference>
<dbReference type="Pfam" id="PF01031">
    <property type="entry name" value="Dynamin_M"/>
    <property type="match status" value="1"/>
</dbReference>
<dbReference type="Pfam" id="PF00350">
    <property type="entry name" value="Dynamin_N"/>
    <property type="match status" value="1"/>
</dbReference>
<dbReference type="Pfam" id="PF02212">
    <property type="entry name" value="GED"/>
    <property type="match status" value="1"/>
</dbReference>
<dbReference type="Pfam" id="PF00169">
    <property type="entry name" value="PH"/>
    <property type="match status" value="1"/>
</dbReference>
<dbReference type="PRINTS" id="PR00195">
    <property type="entry name" value="DYNAMIN"/>
</dbReference>
<dbReference type="SMART" id="SM00053">
    <property type="entry name" value="DYNc"/>
    <property type="match status" value="1"/>
</dbReference>
<dbReference type="SMART" id="SM00302">
    <property type="entry name" value="GED"/>
    <property type="match status" value="1"/>
</dbReference>
<dbReference type="SMART" id="SM00233">
    <property type="entry name" value="PH"/>
    <property type="match status" value="1"/>
</dbReference>
<dbReference type="SUPFAM" id="SSF52540">
    <property type="entry name" value="P-loop containing nucleoside triphosphate hydrolases"/>
    <property type="match status" value="1"/>
</dbReference>
<dbReference type="SUPFAM" id="SSF50729">
    <property type="entry name" value="PH domain-like"/>
    <property type="match status" value="1"/>
</dbReference>
<dbReference type="PROSITE" id="PS00410">
    <property type="entry name" value="G_DYNAMIN_1"/>
    <property type="match status" value="1"/>
</dbReference>
<dbReference type="PROSITE" id="PS51718">
    <property type="entry name" value="G_DYNAMIN_2"/>
    <property type="match status" value="1"/>
</dbReference>
<dbReference type="PROSITE" id="PS51388">
    <property type="entry name" value="GED"/>
    <property type="match status" value="1"/>
</dbReference>
<dbReference type="PROSITE" id="PS50003">
    <property type="entry name" value="PH_DOMAIN"/>
    <property type="match status" value="1"/>
</dbReference>
<protein>
    <recommendedName>
        <fullName evidence="42">Dynamin-2</fullName>
        <ecNumber evidence="36">3.6.5.5</ecNumber>
    </recommendedName>
    <alternativeName>
        <fullName evidence="41">Dynamin 2</fullName>
    </alternativeName>
    <alternativeName>
        <fullName evidence="43">Dynamin II</fullName>
    </alternativeName>
</protein>
<accession>P50570</accession>
<accession>A8K1B6</accession>
<accession>E7EV30</accession>
<accession>E9PEQ4</accession>
<accession>K7ESI9</accession>
<accession>Q5I0Y0</accession>
<accession>Q7Z5S3</accession>
<accession>Q9UPH4</accession>
<reference key="1">
    <citation type="journal article" date="1995" name="Gene">
        <title>Isolation of an ubiquitously expressed cDNA encoding human dynamin II, a member of the large GTP-binding protein family.</title>
        <authorList>
            <person name="Diatloff-Zito C."/>
            <person name="Gordon A.J.E."/>
            <person name="Duchaud E."/>
            <person name="Merlin G."/>
        </authorList>
    </citation>
    <scope>NUCLEOTIDE SEQUENCE [MRNA] (ISOFORMS 1 AND 2)</scope>
    <scope>TISSUE SPECIFICITY</scope>
</reference>
<reference key="2">
    <citation type="journal article" date="2004" name="Nat. Genet.">
        <title>Complete sequencing and characterization of 21,243 full-length human cDNAs.</title>
        <authorList>
            <person name="Ota T."/>
            <person name="Suzuki Y."/>
            <person name="Nishikawa T."/>
            <person name="Otsuki T."/>
            <person name="Sugiyama T."/>
            <person name="Irie R."/>
            <person name="Wakamatsu A."/>
            <person name="Hayashi K."/>
            <person name="Sato H."/>
            <person name="Nagai K."/>
            <person name="Kimura K."/>
            <person name="Makita H."/>
            <person name="Sekine M."/>
            <person name="Obayashi M."/>
            <person name="Nishi T."/>
            <person name="Shibahara T."/>
            <person name="Tanaka T."/>
            <person name="Ishii S."/>
            <person name="Yamamoto J."/>
            <person name="Saito K."/>
            <person name="Kawai Y."/>
            <person name="Isono Y."/>
            <person name="Nakamura Y."/>
            <person name="Nagahari K."/>
            <person name="Murakami K."/>
            <person name="Yasuda T."/>
            <person name="Iwayanagi T."/>
            <person name="Wagatsuma M."/>
            <person name="Shiratori A."/>
            <person name="Sudo H."/>
            <person name="Hosoiri T."/>
            <person name="Kaku Y."/>
            <person name="Kodaira H."/>
            <person name="Kondo H."/>
            <person name="Sugawara M."/>
            <person name="Takahashi M."/>
            <person name="Kanda K."/>
            <person name="Yokoi T."/>
            <person name="Furuya T."/>
            <person name="Kikkawa E."/>
            <person name="Omura Y."/>
            <person name="Abe K."/>
            <person name="Kamihara K."/>
            <person name="Katsuta N."/>
            <person name="Sato K."/>
            <person name="Tanikawa M."/>
            <person name="Yamazaki M."/>
            <person name="Ninomiya K."/>
            <person name="Ishibashi T."/>
            <person name="Yamashita H."/>
            <person name="Murakawa K."/>
            <person name="Fujimori K."/>
            <person name="Tanai H."/>
            <person name="Kimata M."/>
            <person name="Watanabe M."/>
            <person name="Hiraoka S."/>
            <person name="Chiba Y."/>
            <person name="Ishida S."/>
            <person name="Ono Y."/>
            <person name="Takiguchi S."/>
            <person name="Watanabe S."/>
            <person name="Yosida M."/>
            <person name="Hotuta T."/>
            <person name="Kusano J."/>
            <person name="Kanehori K."/>
            <person name="Takahashi-Fujii A."/>
            <person name="Hara H."/>
            <person name="Tanase T.-O."/>
            <person name="Nomura Y."/>
            <person name="Togiya S."/>
            <person name="Komai F."/>
            <person name="Hara R."/>
            <person name="Takeuchi K."/>
            <person name="Arita M."/>
            <person name="Imose N."/>
            <person name="Musashino K."/>
            <person name="Yuuki H."/>
            <person name="Oshima A."/>
            <person name="Sasaki N."/>
            <person name="Aotsuka S."/>
            <person name="Yoshikawa Y."/>
            <person name="Matsunawa H."/>
            <person name="Ichihara T."/>
            <person name="Shiohata N."/>
            <person name="Sano S."/>
            <person name="Moriya S."/>
            <person name="Momiyama H."/>
            <person name="Satoh N."/>
            <person name="Takami S."/>
            <person name="Terashima Y."/>
            <person name="Suzuki O."/>
            <person name="Nakagawa S."/>
            <person name="Senoh A."/>
            <person name="Mizoguchi H."/>
            <person name="Goto Y."/>
            <person name="Shimizu F."/>
            <person name="Wakebe H."/>
            <person name="Hishigaki H."/>
            <person name="Watanabe T."/>
            <person name="Sugiyama A."/>
            <person name="Takemoto M."/>
            <person name="Kawakami B."/>
            <person name="Yamazaki M."/>
            <person name="Watanabe K."/>
            <person name="Kumagai A."/>
            <person name="Itakura S."/>
            <person name="Fukuzumi Y."/>
            <person name="Fujimori Y."/>
            <person name="Komiyama M."/>
            <person name="Tashiro H."/>
            <person name="Tanigami A."/>
            <person name="Fujiwara T."/>
            <person name="Ono T."/>
            <person name="Yamada K."/>
            <person name="Fujii Y."/>
            <person name="Ozaki K."/>
            <person name="Hirao M."/>
            <person name="Ohmori Y."/>
            <person name="Kawabata A."/>
            <person name="Hikiji T."/>
            <person name="Kobatake N."/>
            <person name="Inagaki H."/>
            <person name="Ikema Y."/>
            <person name="Okamoto S."/>
            <person name="Okitani R."/>
            <person name="Kawakami T."/>
            <person name="Noguchi S."/>
            <person name="Itoh T."/>
            <person name="Shigeta K."/>
            <person name="Senba T."/>
            <person name="Matsumura K."/>
            <person name="Nakajima Y."/>
            <person name="Mizuno T."/>
            <person name="Morinaga M."/>
            <person name="Sasaki M."/>
            <person name="Togashi T."/>
            <person name="Oyama M."/>
            <person name="Hata H."/>
            <person name="Watanabe M."/>
            <person name="Komatsu T."/>
            <person name="Mizushima-Sugano J."/>
            <person name="Satoh T."/>
            <person name="Shirai Y."/>
            <person name="Takahashi Y."/>
            <person name="Nakagawa K."/>
            <person name="Okumura K."/>
            <person name="Nagase T."/>
            <person name="Nomura N."/>
            <person name="Kikuchi H."/>
            <person name="Masuho Y."/>
            <person name="Yamashita R."/>
            <person name="Nakai K."/>
            <person name="Yada T."/>
            <person name="Nakamura Y."/>
            <person name="Ohara O."/>
            <person name="Isogai T."/>
            <person name="Sugano S."/>
        </authorList>
    </citation>
    <scope>NUCLEOTIDE SEQUENCE [LARGE SCALE MRNA] (ISOFORMS 3 AND 5)</scope>
    <source>
        <tissue>Astrocyte</tissue>
        <tissue>Brain</tissue>
    </source>
</reference>
<reference key="3">
    <citation type="journal article" date="2004" name="Nature">
        <title>The DNA sequence and biology of human chromosome 19.</title>
        <authorList>
            <person name="Grimwood J."/>
            <person name="Gordon L.A."/>
            <person name="Olsen A.S."/>
            <person name="Terry A."/>
            <person name="Schmutz J."/>
            <person name="Lamerdin J.E."/>
            <person name="Hellsten U."/>
            <person name="Goodstein D."/>
            <person name="Couronne O."/>
            <person name="Tran-Gyamfi M."/>
            <person name="Aerts A."/>
            <person name="Altherr M."/>
            <person name="Ashworth L."/>
            <person name="Bajorek E."/>
            <person name="Black S."/>
            <person name="Branscomb E."/>
            <person name="Caenepeel S."/>
            <person name="Carrano A.V."/>
            <person name="Caoile C."/>
            <person name="Chan Y.M."/>
            <person name="Christensen M."/>
            <person name="Cleland C.A."/>
            <person name="Copeland A."/>
            <person name="Dalin E."/>
            <person name="Dehal P."/>
            <person name="Denys M."/>
            <person name="Detter J.C."/>
            <person name="Escobar J."/>
            <person name="Flowers D."/>
            <person name="Fotopulos D."/>
            <person name="Garcia C."/>
            <person name="Georgescu A.M."/>
            <person name="Glavina T."/>
            <person name="Gomez M."/>
            <person name="Gonzales E."/>
            <person name="Groza M."/>
            <person name="Hammon N."/>
            <person name="Hawkins T."/>
            <person name="Haydu L."/>
            <person name="Ho I."/>
            <person name="Huang W."/>
            <person name="Israni S."/>
            <person name="Jett J."/>
            <person name="Kadner K."/>
            <person name="Kimball H."/>
            <person name="Kobayashi A."/>
            <person name="Larionov V."/>
            <person name="Leem S.-H."/>
            <person name="Lopez F."/>
            <person name="Lou Y."/>
            <person name="Lowry S."/>
            <person name="Malfatti S."/>
            <person name="Martinez D."/>
            <person name="McCready P.M."/>
            <person name="Medina C."/>
            <person name="Morgan J."/>
            <person name="Nelson K."/>
            <person name="Nolan M."/>
            <person name="Ovcharenko I."/>
            <person name="Pitluck S."/>
            <person name="Pollard M."/>
            <person name="Popkie A.P."/>
            <person name="Predki P."/>
            <person name="Quan G."/>
            <person name="Ramirez L."/>
            <person name="Rash S."/>
            <person name="Retterer J."/>
            <person name="Rodriguez A."/>
            <person name="Rogers S."/>
            <person name="Salamov A."/>
            <person name="Salazar A."/>
            <person name="She X."/>
            <person name="Smith D."/>
            <person name="Slezak T."/>
            <person name="Solovyev V."/>
            <person name="Thayer N."/>
            <person name="Tice H."/>
            <person name="Tsai M."/>
            <person name="Ustaszewska A."/>
            <person name="Vo N."/>
            <person name="Wagner M."/>
            <person name="Wheeler J."/>
            <person name="Wu K."/>
            <person name="Xie G."/>
            <person name="Yang J."/>
            <person name="Dubchak I."/>
            <person name="Furey T.S."/>
            <person name="DeJong P."/>
            <person name="Dickson M."/>
            <person name="Gordon D."/>
            <person name="Eichler E.E."/>
            <person name="Pennacchio L.A."/>
            <person name="Richardson P."/>
            <person name="Stubbs L."/>
            <person name="Rokhsar D.S."/>
            <person name="Myers R.M."/>
            <person name="Rubin E.M."/>
            <person name="Lucas S.M."/>
        </authorList>
    </citation>
    <scope>NUCLEOTIDE SEQUENCE [LARGE SCALE GENOMIC DNA]</scope>
</reference>
<reference key="4">
    <citation type="journal article" date="2004" name="Genome Res.">
        <title>The status, quality, and expansion of the NIH full-length cDNA project: the Mammalian Gene Collection (MGC).</title>
        <authorList>
            <consortium name="The MGC Project Team"/>
        </authorList>
    </citation>
    <scope>NUCLEOTIDE SEQUENCE [LARGE SCALE MRNA] (ISOFORMS 1 AND 2)</scope>
    <source>
        <tissue>Ovary</tissue>
        <tissue>Uterus</tissue>
    </source>
</reference>
<reference key="5">
    <citation type="journal article" date="2001" name="J. Biol. Chem.">
        <title>Dynamin isoform-specific interaction with the shank/ProSAP scaffolding proteins of the postsynaptic density and actin cytoskeleton.</title>
        <authorList>
            <person name="Okamoto P.M."/>
            <person name="Gamby C."/>
            <person name="Wells D."/>
            <person name="Fallon J."/>
            <person name="Vallee R.B."/>
        </authorList>
    </citation>
    <scope>INTERACTION WITH SHANK PROTEINS</scope>
</reference>
<reference key="6">
    <citation type="journal article" date="2004" name="Nat. Cell Biol.">
        <title>Dynamin 2 binds gamma-tubulin and participates in centrosome cohesion.</title>
        <authorList>
            <person name="Thompson H.M."/>
            <person name="Cao H."/>
            <person name="Chen J."/>
            <person name="Euteneuer U."/>
            <person name="McNiven M.A."/>
        </authorList>
    </citation>
    <scope>SUBCELLULAR LOCATION</scope>
</reference>
<reference key="7">
    <citation type="journal article" date="2005" name="Cell">
        <title>TTP specifically regulates the internalization of the transferrin receptor.</title>
        <authorList>
            <person name="Tosoni D."/>
            <person name="Puri C."/>
            <person name="Confalonieri S."/>
            <person name="Salcini A.E."/>
            <person name="De Camilli P."/>
            <person name="Tacchetti C."/>
            <person name="Di Fiore P.P."/>
        </authorList>
    </citation>
    <scope>INTERACTION WITH SH3BP4</scope>
</reference>
<reference key="8">
    <citation type="journal article" date="2005" name="Mol. Biol. Cell">
        <title>SNX9 regulates dynamin assembly and is required for efficient clathrin-mediated endocytosis.</title>
        <authorList>
            <person name="Soulet F."/>
            <person name="Yarar D."/>
            <person name="Leonard M."/>
            <person name="Schmid S.L."/>
        </authorList>
    </citation>
    <scope>SUBCELLULAR LOCATION</scope>
    <scope>INTERACTION WITH SNX9</scope>
</reference>
<reference key="9">
    <citation type="journal article" date="2007" name="FEBS Lett.">
        <title>Myosin 1E interacts with synaptojanin-1 and dynamin and is involved in endocytosis.</title>
        <authorList>
            <person name="Krendel M."/>
            <person name="Osterweil E.K."/>
            <person name="Mooseker M.S."/>
        </authorList>
    </citation>
    <scope>INTERACTION WITH MYO1E</scope>
</reference>
<reference key="10">
    <citation type="journal article" date="2007" name="Nat. Genet.">
        <title>Mutations in amphiphysin 2 (BIN1) disrupt interaction with dynamin 2 and cause autosomal recessive centronuclear myopathy.</title>
        <authorList>
            <person name="Nicot A.-S."/>
            <person name="Toussaint A."/>
            <person name="Tosch V."/>
            <person name="Kretz C."/>
            <person name="Wallgren-Pettersson C."/>
            <person name="Iwarsson E."/>
            <person name="Kingston H."/>
            <person name="Garnier J.-M."/>
            <person name="Biancalana V."/>
            <person name="Oldfors A."/>
            <person name="Mandel J.-L."/>
            <person name="Laporte J."/>
        </authorList>
    </citation>
    <scope>INTERACTION WITH BIN1</scope>
</reference>
<reference key="11">
    <citation type="journal article" date="2008" name="J. Biol. Chem.">
        <title>A novel sorting nexin modulates endocytic trafficking and alpha-secretase cleavage of the amyloid precursor protein.</title>
        <authorList>
            <person name="Schobel S."/>
            <person name="Neumann S."/>
            <person name="Hertweck M."/>
            <person name="Dislich B."/>
            <person name="Kuhn P.H."/>
            <person name="Kremmer E."/>
            <person name="Seed B."/>
            <person name="Baumeister R."/>
            <person name="Haass C."/>
            <person name="Lichtenthaler S.F."/>
        </authorList>
    </citation>
    <scope>INTERACTION WITH SNX33</scope>
</reference>
<reference key="12">
    <citation type="journal article" date="2008" name="Mol. Biol. Cell">
        <title>The PCH family member proline-serine-threonine phosphatase-interacting protein 1 targets to the leukocyte uropod and regulates directed cell migration.</title>
        <authorList>
            <person name="Cooper K.M."/>
            <person name="Bennin D.A."/>
            <person name="Huttenlocher A."/>
        </authorList>
    </citation>
    <scope>INTERACTION WITH PSTPIP1</scope>
    <scope>SUBCELLULAR LOCATION</scope>
</reference>
<reference key="13">
    <citation type="journal article" date="2008" name="Proc. Natl. Acad. Sci. U.S.A.">
        <title>A quantitative atlas of mitotic phosphorylation.</title>
        <authorList>
            <person name="Dephoure N."/>
            <person name="Zhou C."/>
            <person name="Villen J."/>
            <person name="Beausoleil S.A."/>
            <person name="Bakalarski C.E."/>
            <person name="Elledge S.J."/>
            <person name="Gygi S.P."/>
        </authorList>
    </citation>
    <scope>IDENTIFICATION BY MASS SPECTROMETRY [LARGE SCALE ANALYSIS]</scope>
    <source>
        <tissue>Cervix carcinoma</tissue>
    </source>
</reference>
<reference key="14">
    <citation type="journal article" date="2009" name="J. Biol. Chem.">
        <title>Dynamin2 GTPase and cortactin remodel actin filaments.</title>
        <authorList>
            <person name="Mooren O.L."/>
            <person name="Kotova T.I."/>
            <person name="Moore A.J."/>
            <person name="Schafer D.A."/>
        </authorList>
    </citation>
    <scope>FUNCTION</scope>
</reference>
<reference key="15">
    <citation type="journal article" date="2009" name="Sci. Signal.">
        <title>Quantitative phosphoproteomic analysis of T cell receptor signaling reveals system-wide modulation of protein-protein interactions.</title>
        <authorList>
            <person name="Mayya V."/>
            <person name="Lundgren D.H."/>
            <person name="Hwang S.-I."/>
            <person name="Rezaul K."/>
            <person name="Wu L."/>
            <person name="Eng J.K."/>
            <person name="Rodionov V."/>
            <person name="Han D.K."/>
        </authorList>
    </citation>
    <scope>IDENTIFICATION BY MASS SPECTROMETRY [LARGE SCALE ANALYSIS]</scope>
    <source>
        <tissue>Leukemic T-cell</tissue>
    </source>
</reference>
<reference key="16">
    <citation type="journal article" date="2009" name="Science">
        <title>Lysine acetylation targets protein complexes and co-regulates major cellular functions.</title>
        <authorList>
            <person name="Choudhary C."/>
            <person name="Kumar C."/>
            <person name="Gnad F."/>
            <person name="Nielsen M.L."/>
            <person name="Rehman M."/>
            <person name="Walther T.C."/>
            <person name="Olsen J.V."/>
            <person name="Mann M."/>
        </authorList>
    </citation>
    <scope>ACETYLATION [LARGE SCALE ANALYSIS] AT LYS-598</scope>
    <scope>IDENTIFICATION BY MASS SPECTROMETRY [LARGE SCALE ANALYSIS]</scope>
</reference>
<reference key="17">
    <citation type="journal article" date="2010" name="Cell. Mol. Life Sci.">
        <title>Calcineurin activity is required for the completion of cytokinesis.</title>
        <authorList>
            <person name="Chircop M."/>
            <person name="Malladi C.S."/>
            <person name="Lian A.T."/>
            <person name="Page S.L."/>
            <person name="Zavortink M."/>
            <person name="Gordon C.P."/>
            <person name="McCluskey A."/>
            <person name="Robinson P.J."/>
        </authorList>
    </citation>
    <scope>PHOSPHORYLATION AT SER-764</scope>
</reference>
<reference key="18">
    <citation type="journal article" date="2010" name="Sci. Signal.">
        <title>Quantitative phosphoproteomics reveals widespread full phosphorylation site occupancy during mitosis.</title>
        <authorList>
            <person name="Olsen J.V."/>
            <person name="Vermeulen M."/>
            <person name="Santamaria A."/>
            <person name="Kumar C."/>
            <person name="Miller M.L."/>
            <person name="Jensen L.J."/>
            <person name="Gnad F."/>
            <person name="Cox J."/>
            <person name="Jensen T.S."/>
            <person name="Nigg E.A."/>
            <person name="Brunak S."/>
            <person name="Mann M."/>
        </authorList>
    </citation>
    <scope>IDENTIFICATION BY MASS SPECTROMETRY [LARGE SCALE ANALYSIS]</scope>
    <source>
        <tissue>Cervix carcinoma</tissue>
    </source>
</reference>
<reference key="19">
    <citation type="journal article" date="2011" name="BMC Syst. Biol.">
        <title>Initial characterization of the human central proteome.</title>
        <authorList>
            <person name="Burkard T.R."/>
            <person name="Planyavsky M."/>
            <person name="Kaupe I."/>
            <person name="Breitwieser F.P."/>
            <person name="Buerckstuemmer T."/>
            <person name="Bennett K.L."/>
            <person name="Superti-Furga G."/>
            <person name="Colinge J."/>
        </authorList>
    </citation>
    <scope>IDENTIFICATION BY MASS SPECTROMETRY [LARGE SCALE ANALYSIS]</scope>
</reference>
<reference key="20">
    <citation type="journal article" date="2011" name="PLoS ONE">
        <title>Identification of novel NPRAP/delta-catenin-interacting proteins and the direct association of NPRAP with dynamin 2.</title>
        <authorList>
            <person name="Koutras C."/>
            <person name="Levesque G."/>
        </authorList>
    </citation>
    <scope>INTERACTION WITH CTNND2</scope>
</reference>
<reference key="21">
    <citation type="journal article" date="2014" name="J. Proteomics">
        <title>An enzyme assisted RP-RPLC approach for in-depth analysis of human liver phosphoproteome.</title>
        <authorList>
            <person name="Bian Y."/>
            <person name="Song C."/>
            <person name="Cheng K."/>
            <person name="Dong M."/>
            <person name="Wang F."/>
            <person name="Huang J."/>
            <person name="Sun D."/>
            <person name="Wang L."/>
            <person name="Ye M."/>
            <person name="Zou H."/>
        </authorList>
    </citation>
    <scope>PHOSPHORYLATION [LARGE SCALE ANALYSIS] AT THR-755</scope>
    <scope>IDENTIFICATION BY MASS SPECTROMETRY [LARGE SCALE ANALYSIS]</scope>
    <source>
        <tissue>Liver</tissue>
    </source>
</reference>
<reference key="22">
    <citation type="journal article" date="2015" name="Proteomics">
        <title>N-terminome analysis of the human mitochondrial proteome.</title>
        <authorList>
            <person name="Vaca Jacome A.S."/>
            <person name="Rabilloud T."/>
            <person name="Schaeffer-Reiss C."/>
            <person name="Rompais M."/>
            <person name="Ayoub D."/>
            <person name="Lane L."/>
            <person name="Bairoch A."/>
            <person name="Van Dorsselaer A."/>
            <person name="Carapito C."/>
        </authorList>
    </citation>
    <scope>IDENTIFICATION BY MASS SPECTROMETRY [LARGE SCALE ANALYSIS]</scope>
</reference>
<reference key="23">
    <citation type="journal article" date="2018" name="EMBO Rep.">
        <title>SNX18 regulates ATG9A trafficking from recycling endosomes by recruiting Dynamin-2.</title>
        <authorList>
            <person name="Soereng K."/>
            <person name="Munson M.J."/>
            <person name="Lamb C.A."/>
            <person name="Bjoerndal G.T."/>
            <person name="Pankiv S."/>
            <person name="Carlsson S.R."/>
            <person name="Tooze S.A."/>
            <person name="Simonsen A."/>
        </authorList>
    </citation>
    <scope>FUNCTION</scope>
    <scope>INTERACTION WITH SNX18</scope>
</reference>
<reference key="24">
    <citation type="journal article" date="2021" name="Cell">
        <title>Soluble ACE2-mediated cell entry of SARS-CoV-2 via interaction with proteins related to the renin-angiotensin system.</title>
        <authorList>
            <person name="Yeung M.L."/>
            <person name="Teng J.L.L."/>
            <person name="Jia L."/>
            <person name="Zhang C."/>
            <person name="Huang C."/>
            <person name="Cai J.P."/>
            <person name="Zhou R."/>
            <person name="Chan K.H."/>
            <person name="Zhao H."/>
            <person name="Zhu L."/>
            <person name="Siu K.L."/>
            <person name="Fung S.Y."/>
            <person name="Yung S."/>
            <person name="Chan T.M."/>
            <person name="To K.K."/>
            <person name="Chan J.F."/>
            <person name="Cai Z."/>
            <person name="Lau S.K.P."/>
            <person name="Chen Z."/>
            <person name="Jin D.Y."/>
            <person name="Woo P.C.Y."/>
            <person name="Yuen K.Y."/>
        </authorList>
    </citation>
    <scope>FUNCTION</scope>
</reference>
<reference key="25">
    <citation type="journal article" date="2023" name="J. Cell Biol.">
        <title>GSK3alpha phosphorylates dynamin-2 to promote GLUT4 endocytosis in muscle cells.</title>
        <authorList>
            <person name="Laiman J."/>
            <person name="Hsu Y.J."/>
            <person name="Loh J."/>
            <person name="Tang W.C."/>
            <person name="Chuang M.C."/>
            <person name="Liu H.K."/>
            <person name="Yang W.S."/>
            <person name="Chen B.C."/>
            <person name="Chuang L.M."/>
            <person name="Chang Y.C."/>
            <person name="Liu Y.W."/>
        </authorList>
    </citation>
    <scope>FUNCTION</scope>
    <scope>INTERACTION WITH BIN1</scope>
    <scope>SUBUNIT</scope>
    <scope>VARIANTS CNM1 TRP-465; THR-618; LEU-619 AND VAL-625 DEL</scope>
    <scope>CHARACTERIZATION OF VARIANTS CNM1 TRP-465; THR-618; LEU-619 AND VAL-625 DEL</scope>
    <scope>MUTAGENESIS OF SER-848</scope>
    <scope>PHOSPHORYLATION AT SER-848</scope>
</reference>
<reference key="26">
    <citation type="submission" date="2008-04" db="PDB data bank">
        <title>Solution structure of the PH domain of dynamin-2 from human.</title>
        <authorList>
            <consortium name="RIKEN structural genomics initiative (RSGI)"/>
        </authorList>
    </citation>
    <scope>STRUCTURE BY NMR OF 514-625</scope>
</reference>
<reference key="27">
    <citation type="journal article" date="2005" name="Nat. Genet.">
        <title>Mutations in the pleckstrin homology domain of dynamin 2 cause dominant intermediate Charcot-Marie-Tooth disease.</title>
        <authorList>
            <person name="Zuechner S."/>
            <person name="Noureddine M."/>
            <person name="Kennerson M."/>
            <person name="Verhoeven K."/>
            <person name="Claeys K."/>
            <person name="De Jonghe P."/>
            <person name="Merory J."/>
            <person name="Oliveira S.A."/>
            <person name="Speer M.C."/>
            <person name="Stenger J.E."/>
            <person name="Walizada G."/>
            <person name="Zhu D."/>
            <person name="Pericak-Vance M.A."/>
            <person name="Nicholson G."/>
            <person name="Timmerman V."/>
            <person name="Vance J.M."/>
        </authorList>
    </citation>
    <scope>VARIANTS CMTDIB 555-ASP--GLU-557 DEL; LYS-562 DEL AND GLU-562</scope>
    <scope>CHARACTERIZATION OF VARIANT CMTDIB 555-ASP--GLU-557 DEL</scope>
    <scope>SUBCELLULAR LOCATION</scope>
    <scope>FUNCTION</scope>
</reference>
<reference key="28">
    <citation type="journal article" date="2005" name="Nat. Genet.">
        <title>Mutations in dynamin 2 cause dominant centronuclear myopathy.</title>
        <authorList>
            <person name="Bitoun M."/>
            <person name="Maugenre S."/>
            <person name="Jeannet P.-Y."/>
            <person name="Lacene E."/>
            <person name="Ferrer X."/>
            <person name="Laforet P."/>
            <person name="Martin J.-J."/>
            <person name="Laporte J."/>
            <person name="Lochmueller H."/>
            <person name="Beggs A.H."/>
            <person name="Fardeau M."/>
            <person name="Eymard B."/>
            <person name="Romero N.B."/>
            <person name="Guicheney P."/>
        </authorList>
    </citation>
    <scope>VARIANTS CNM1 LYS-368; TRP-369; GLN-369 AND TRP-465</scope>
    <scope>CHARACTERIZATION OF VARIANTS CNM1 TRP-369 AND TRP-465</scope>
    <scope>SUBCELLULAR LOCATION</scope>
</reference>
<reference key="29">
    <citation type="journal article" date="2007" name="Ann. Neurol.">
        <title>Dynamin 2 mutations cause sporadic centronuclear myopathy with neonatal onset.</title>
        <authorList>
            <person name="Bitoun M."/>
            <person name="Bevilacqua J.A."/>
            <person name="Prudhon B."/>
            <person name="Maugenre S."/>
            <person name="Taratuto A.L."/>
            <person name="Monges S."/>
            <person name="Lubieniecki F."/>
            <person name="Cances C."/>
            <person name="Uro-Coste E."/>
            <person name="Mayer M."/>
            <person name="Fardeau M."/>
            <person name="Romero N.B."/>
            <person name="Guicheney P."/>
        </authorList>
    </citation>
    <scope>VARIANTS CNM1 THR-618; LEU-619; TRP-619 AND VAL-625 DEL</scope>
</reference>
<reference key="30">
    <citation type="journal article" date="2007" name="Neurology">
        <title>Two novel mutations in dynamin-2 cause axonal Charcot-Marie-Tooth disease.</title>
        <authorList>
            <person name="Fabrizi G.M."/>
            <person name="Ferrarini M."/>
            <person name="Cavallaro T."/>
            <person name="Cabrini I."/>
            <person name="Cerini R."/>
            <person name="Bertolasi L."/>
            <person name="Rizzuto N."/>
        </authorList>
    </citation>
    <scope>VARIANTS CMT2M CYS-537 AND HIS-570</scope>
</reference>
<reference key="31">
    <citation type="journal article" date="2007" name="Neuromuscul. Disord.">
        <title>Subtle central and peripheral nervous system abnormalities in a family with centronuclear myopathy and a novel dynamin 2 gene mutation.</title>
        <authorList>
            <person name="Echaniz-Laguna A."/>
            <person name="Nicot A.S."/>
            <person name="Carre S."/>
            <person name="Franques J."/>
            <person name="Tranchant C."/>
            <person name="Dondaine N."/>
            <person name="Biancalana V."/>
            <person name="Mandel J.L."/>
            <person name="Laporte J."/>
        </authorList>
    </citation>
    <scope>VARIANT CNM1 GLN-368</scope>
</reference>
<reference key="32">
    <citation type="journal article" date="2008" name="J. Neurol.">
        <title>Magnetic resonance imaging findings of leg musculature in Charcot-Marie-Tooth disease type 2 due to dynamin 2 mutation.</title>
        <authorList>
            <person name="Gallardo E."/>
            <person name="Claeys K.G."/>
            <person name="Nelis E."/>
            <person name="Garcia A."/>
            <person name="Canga A."/>
            <person name="Combarros O."/>
            <person name="Timmerman V."/>
            <person name="De Jonghe P."/>
            <person name="Berciano J."/>
        </authorList>
    </citation>
    <scope>VARIANT CMT2M ARG-358</scope>
</reference>
<reference key="33">
    <citation type="journal article" date="2009" name="Hum. Mutat.">
        <title>Dynamin 2 mutations associated with human diseases impair clathrin-mediated receptor endocytosis.</title>
        <authorList>
            <person name="Bitoun M."/>
            <person name="Durieux A.-C."/>
            <person name="Prudhon B."/>
            <person name="Bevilacqua J.A."/>
            <person name="Herledan A."/>
            <person name="Sakanyan V."/>
            <person name="Urtizberea A."/>
            <person name="Cartier L."/>
            <person name="Romero N.B."/>
            <person name="Guicheney P."/>
        </authorList>
    </citation>
    <scope>VARIANT CNM1 LYS-650</scope>
    <scope>CHARACTERIZATION OF VARIANTS CNM1 TRP-465; VAL-625 DEL AND LYS-650</scope>
    <scope>CHARACTERIZATION OF VARIANT CMTDIB GLU-562</scope>
    <scope>PATHOPHYSIOLOGICAL PATHWAY IN THE AUTOSOMAL FORMS OF CNM AND DNM2-CMT NEUROPATHY</scope>
    <scope>FUNCTION</scope>
    <scope>TISSUE SPECIFICITY</scope>
    <scope>MUTAGENESIS OF LYS-44</scope>
</reference>
<reference key="34">
    <citation type="journal article" date="2009" name="Neurology">
        <title>A new centronuclear myopathy phenotype due to a novel dynamin 2 mutation.</title>
        <authorList>
            <person name="Bitoun M."/>
            <person name="Bevilacqua J.A."/>
            <person name="Eymard B."/>
            <person name="Prudhon B."/>
            <person name="Fardeau M."/>
            <person name="Guicheney P."/>
            <person name="Romero N.B."/>
        </authorList>
    </citation>
    <scope>VARIANT CNM1 LYS-560</scope>
</reference>
<reference key="35">
    <citation type="journal article" date="2010" name="Neuromuscul. Disord.">
        <title>Centronuclear myopathy with cataracts due to a novel dynamin 2 (DNM2) mutation.</title>
        <authorList>
            <person name="Jungbluth H."/>
            <person name="Cullup T."/>
            <person name="Lillis S."/>
            <person name="Zhou H."/>
            <person name="Abbs S."/>
            <person name="Sewry C."/>
            <person name="Muntoni F."/>
        </authorList>
    </citation>
    <scope>VARIANT CNM1 PRO-621</scope>
</reference>
<reference key="36">
    <citation type="journal article" date="2010" name="Neuromuscul. Disord.">
        <title>Adult course in dynamin 2 dominant centronuclear myopathy with neonatal onset.</title>
        <authorList>
            <person name="Melberg A."/>
            <person name="Kretz C."/>
            <person name="Kalimo H."/>
            <person name="Wallgren-Pettersson C."/>
            <person name="Toussaint A."/>
            <person name="Bohm J."/>
            <person name="Stalberg E."/>
            <person name="Laporte J."/>
        </authorList>
    </citation>
    <scope>VARIANT CNM1 ASP-618</scope>
</reference>
<reference key="37">
    <citation type="journal article" date="2010" name="Neuromuscul. Disord.">
        <title>Expanding the clinical, pathological and MRI phenotype of DNM2-related centronuclear myopathy.</title>
        <authorList>
            <person name="Susman R.D."/>
            <person name="Quijano-Roy S."/>
            <person name="Yang N."/>
            <person name="Webster R."/>
            <person name="Clarke N.F."/>
            <person name="Dowling J."/>
            <person name="Kennerson M."/>
            <person name="Nicholson G."/>
            <person name="Biancalana V."/>
            <person name="Ilkovski B."/>
            <person name="Flanigan K.M."/>
            <person name="Arbuckle S."/>
            <person name="Malladi C."/>
            <person name="Robinson P."/>
            <person name="Vucic S."/>
            <person name="Mayer M."/>
            <person name="Romero N.B."/>
            <person name="Urtizberea J.A."/>
            <person name="Garcia-Bragado F."/>
            <person name="Guicheney P."/>
            <person name="Bitoun M."/>
            <person name="Carlier R.Y."/>
            <person name="North K.N."/>
        </authorList>
    </citation>
    <scope>VARIANTS CNM1 LYS-368; TRP-465; HIS-522; THR-618; LEU-619 AND HIS-627</scope>
</reference>
<reference key="38">
    <citation type="journal article" date="2012" name="Hum. Mutat.">
        <title>Mutation spectrum in the large GTPase dynamin 2, and genotype-phenotype correlation in autosomal dominant centronuclear myopathy.</title>
        <authorList>
            <person name="Bohm J."/>
            <person name="Biancalana V."/>
            <person name="Dechene E.T."/>
            <person name="Bitoun M."/>
            <person name="Pierson C.R."/>
            <person name="Schaefer E."/>
            <person name="Karasoy H."/>
            <person name="Dempsey M.A."/>
            <person name="Klein F."/>
            <person name="Dondaine N."/>
            <person name="Kretz C."/>
            <person name="Haumesser N."/>
            <person name="Poirson C."/>
            <person name="Toussaint A."/>
            <person name="Greenleaf R.S."/>
            <person name="Barger M.A."/>
            <person name="Mahoney L.J."/>
            <person name="Kang P.B."/>
            <person name="Zanoteli E."/>
            <person name="Vissing J."/>
            <person name="Witting N."/>
            <person name="Echaniz-Laguna A."/>
            <person name="Wallgren-Pettersson C."/>
            <person name="Dowling J."/>
            <person name="Merlini L."/>
            <person name="Oldfors A."/>
            <person name="Bomme Ousager L."/>
            <person name="Melki J."/>
            <person name="Krause A."/>
            <person name="Jern C."/>
            <person name="Oliveira A.S."/>
            <person name="Petit F."/>
            <person name="Jacquette A."/>
            <person name="Chaussenot A."/>
            <person name="Mowat D."/>
            <person name="Leheup B."/>
            <person name="Cristofano M."/>
            <person name="Poza Aldea J.J."/>
            <person name="Michel F."/>
            <person name="Furby A."/>
            <person name="Llona J.E."/>
            <person name="Van Coster R."/>
            <person name="Bertini E."/>
            <person name="Urtizberea J.A."/>
            <person name="Drouin-Garraud V."/>
            <person name="Beroud C."/>
            <person name="Prudhon B."/>
            <person name="Bedford M."/>
            <person name="Mathews K."/>
            <person name="Erby L.A."/>
            <person name="Smith S.A."/>
            <person name="Roggenbuck J."/>
            <person name="Crowe C.A."/>
            <person name="Brennan Spitale A."/>
            <person name="Johal S.C."/>
            <person name="Amato A.A."/>
            <person name="Demmer L.A."/>
            <person name="Jonas J."/>
            <person name="Darras B.T."/>
            <person name="Bird T.D."/>
            <person name="Laurino M."/>
            <person name="Welt S.I."/>
            <person name="Trotter C."/>
            <person name="Guicheney P."/>
            <person name="Das S."/>
            <person name="Mandel J.L."/>
            <person name="Beggs A.H."/>
            <person name="Laporte J."/>
        </authorList>
    </citation>
    <scope>VARIANTS CNM1 CYS-522; GLY-523 AND ARG-627</scope>
</reference>
<reference key="39">
    <citation type="journal article" date="2013" name="Eur. J. Hum. Genet.">
        <title>Dynamin 2 homozygous mutation in humans with a lethal congenital syndrome.</title>
        <authorList>
            <person name="Koutsopoulos O.S."/>
            <person name="Kretz C."/>
            <person name="Weller C.M."/>
            <person name="Roux A."/>
            <person name="Mojzisova H."/>
            <person name="Boehm J."/>
            <person name="Koch C."/>
            <person name="Toussaint A."/>
            <person name="Heckel E."/>
            <person name="Stemkens D."/>
            <person name="Ter Horst S.A."/>
            <person name="Thibault C."/>
            <person name="Koch M."/>
            <person name="Mehdi S.Q."/>
            <person name="Bijlsma E.K."/>
            <person name="Mandel J.L."/>
            <person name="Vermot J."/>
            <person name="Laporte J."/>
        </authorList>
    </citation>
    <scope>VARIANT LCCS5 VAL-379</scope>
</reference>
<reference key="40">
    <citation type="journal article" date="2014" name="Dis. Model. Mech.">
        <title>The myopathy-causing mutation DNM2-S619L leads to defective tubulation in vitro and in developing zebrafish.</title>
        <authorList>
            <person name="Gibbs E.M."/>
            <person name="Davidson A.E."/>
            <person name="Telfer W.R."/>
            <person name="Feldman E.L."/>
            <person name="Dowling J.J."/>
        </authorList>
    </citation>
    <scope>VARIANT CNM1 LEU-619</scope>
    <scope>CHARACTERIZATION OF VARIANT CNM1 LEU-619</scope>
    <scope>FUNCTION</scope>
</reference>
<reference key="41">
    <citation type="journal article" date="2020" name="Dev. Cell">
        <title>A DNM2 Centronuclear Myopathy Mutation Reveals a Link between Recycling Endosome Scission and Autophagy.</title>
        <authorList>
            <person name="Puri C."/>
            <person name="Manni M.M."/>
            <person name="Vicinanza M."/>
            <person name="Hilcenko C."/>
            <person name="Zhu Y."/>
            <person name="Runwal G."/>
            <person name="Stamatakou E."/>
            <person name="Menzies F.M."/>
            <person name="Mamchaoui K."/>
            <person name="Bitoun M."/>
            <person name="Rubinsztein D.C."/>
        </authorList>
    </citation>
    <scope>VARIANT CNM1 TRP-465</scope>
    <scope>CHARACTERIZATION OF VARIANT CNM1 TRP-465</scope>
    <scope>FUNCTION</scope>
    <scope>SUBCELLULAR LOCATION</scope>
    <scope>INTERACTION WITH SNX18; ITSN1; MAP1LC3B; GABARAP; GABARAPL1 AND GABARAPL2</scope>
    <scope>MUTAGENESIS OF TRP-525</scope>
</reference>
<reference key="42">
    <citation type="journal article" date="2021" name="Front. Cell. Neurosci.">
        <title>Gain-of-Function Properties of a Dynamin 2 Mutant Implicated in Charcot-Marie-Tooth Disease.</title>
        <authorList>
            <person name="Tassin T.C."/>
            <person name="Barylko B."/>
            <person name="Hedde P.N."/>
            <person name="Chen Y."/>
            <person name="Binns D.D."/>
            <person name="James N.G."/>
            <person name="Mueller J.D."/>
            <person name="Jameson D.M."/>
            <person name="Taussig R."/>
            <person name="Albanesi J.P."/>
        </authorList>
    </citation>
    <scope>VARIANTS CNM1 555-ASP--GLU-557 DEL; GLU-562 AND THR-618</scope>
    <scope>CHARACTERIZATION OF VARIANTS CNM1 555-ASP--GLU-557 DEL; GLU-562 AND THR-618</scope>
    <scope>FUNCTION</scope>
    <scope>CATALYTIC ACTIVITY</scope>
    <scope>SUBUNIT</scope>
    <scope>DOMAIN</scope>
    <scope>PHOSPHORYLATION AT TYR-231 AND TYR-597</scope>
    <scope>MUTAGENESIS OF TYR-231 AND TYR-597</scope>
</reference>
<feature type="chain" id="PRO_0000206570" description="Dynamin-2">
    <location>
        <begin position="1"/>
        <end position="870"/>
    </location>
</feature>
<feature type="domain" description="Dynamin-type G" evidence="6">
    <location>
        <begin position="28"/>
        <end position="294"/>
    </location>
</feature>
<feature type="domain" description="PH" evidence="4">
    <location>
        <begin position="519"/>
        <end position="625"/>
    </location>
</feature>
<feature type="domain" description="GED" evidence="5">
    <location>
        <begin position="653"/>
        <end position="744"/>
    </location>
</feature>
<feature type="region of interest" description="G1 motif" evidence="6">
    <location>
        <begin position="38"/>
        <end position="45"/>
    </location>
</feature>
<feature type="region of interest" description="G2 motif" evidence="6">
    <location>
        <begin position="64"/>
        <end position="66"/>
    </location>
</feature>
<feature type="region of interest" description="G3 motif" evidence="6">
    <location>
        <begin position="136"/>
        <end position="139"/>
    </location>
</feature>
<feature type="region of interest" description="G4 motif" evidence="6">
    <location>
        <begin position="205"/>
        <end position="208"/>
    </location>
</feature>
<feature type="region of interest" description="G5 motif" evidence="6">
    <location>
        <begin position="235"/>
        <end position="238"/>
    </location>
</feature>
<feature type="region of interest" description="Disordered" evidence="7">
    <location>
        <begin position="741"/>
        <end position="870"/>
    </location>
</feature>
<feature type="compositionally biased region" description="Polar residues" evidence="7">
    <location>
        <begin position="756"/>
        <end position="767"/>
    </location>
</feature>
<feature type="compositionally biased region" description="Low complexity" evidence="7">
    <location>
        <begin position="796"/>
        <end position="806"/>
    </location>
</feature>
<feature type="compositionally biased region" description="Pro residues" evidence="7">
    <location>
        <begin position="826"/>
        <end position="855"/>
    </location>
</feature>
<feature type="binding site" evidence="3">
    <location>
        <position position="41"/>
    </location>
    <ligand>
        <name>GDP</name>
        <dbReference type="ChEBI" id="CHEBI:58189"/>
    </ligand>
</feature>
<feature type="binding site" evidence="3">
    <location>
        <position position="43"/>
    </location>
    <ligand>
        <name>GDP</name>
        <dbReference type="ChEBI" id="CHEBI:58189"/>
    </ligand>
</feature>
<feature type="binding site" evidence="3">
    <location>
        <position position="44"/>
    </location>
    <ligand>
        <name>GDP</name>
        <dbReference type="ChEBI" id="CHEBI:58189"/>
    </ligand>
</feature>
<feature type="binding site" evidence="3">
    <location>
        <position position="45"/>
    </location>
    <ligand>
        <name>GDP</name>
        <dbReference type="ChEBI" id="CHEBI:58189"/>
    </ligand>
</feature>
<feature type="binding site" evidence="3">
    <location>
        <position position="46"/>
    </location>
    <ligand>
        <name>GDP</name>
        <dbReference type="ChEBI" id="CHEBI:58189"/>
    </ligand>
</feature>
<feature type="binding site" evidence="3">
    <location>
        <position position="59"/>
    </location>
    <ligand>
        <name>GDP</name>
        <dbReference type="ChEBI" id="CHEBI:58189"/>
    </ligand>
</feature>
<feature type="binding site" evidence="3">
    <location>
        <position position="60"/>
    </location>
    <ligand>
        <name>GDP</name>
        <dbReference type="ChEBI" id="CHEBI:58189"/>
    </ligand>
</feature>
<feature type="binding site" evidence="3">
    <location>
        <position position="206"/>
    </location>
    <ligand>
        <name>GDP</name>
        <dbReference type="ChEBI" id="CHEBI:58189"/>
    </ligand>
</feature>
<feature type="binding site" evidence="3">
    <location>
        <position position="208"/>
    </location>
    <ligand>
        <name>GDP</name>
        <dbReference type="ChEBI" id="CHEBI:58189"/>
    </ligand>
</feature>
<feature type="binding site" evidence="3">
    <location>
        <position position="211"/>
    </location>
    <ligand>
        <name>GDP</name>
        <dbReference type="ChEBI" id="CHEBI:58189"/>
    </ligand>
</feature>
<feature type="binding site" evidence="3">
    <location>
        <position position="236"/>
    </location>
    <ligand>
        <name>GDP</name>
        <dbReference type="ChEBI" id="CHEBI:58189"/>
    </ligand>
</feature>
<feature type="binding site" evidence="3">
    <location>
        <position position="237"/>
    </location>
    <ligand>
        <name>GDP</name>
        <dbReference type="ChEBI" id="CHEBI:58189"/>
    </ligand>
</feature>
<feature type="binding site" evidence="3">
    <location>
        <position position="239"/>
    </location>
    <ligand>
        <name>GDP</name>
        <dbReference type="ChEBI" id="CHEBI:58189"/>
    </ligand>
</feature>
<feature type="modified residue" description="Phosphotyrosine; by SRC" evidence="1 45">
    <location>
        <position position="231"/>
    </location>
</feature>
<feature type="modified residue" description="N6-acetyllysine" evidence="2">
    <location>
        <position position="299"/>
    </location>
</feature>
<feature type="modified residue" description="Phosphotyrosine; by SRC" evidence="1 45">
    <location>
        <position position="597"/>
    </location>
</feature>
<feature type="modified residue" description="N6-acetyllysine" evidence="47">
    <location>
        <position position="598"/>
    </location>
</feature>
<feature type="modified residue" description="Phosphothreonine" evidence="48">
    <location>
        <position position="755"/>
    </location>
</feature>
<feature type="modified residue" description="Phosphoserine; by CDK1" evidence="1">
    <location>
        <position position="764"/>
    </location>
</feature>
<feature type="modified residue" description="Phosphoserine; by GSK3-alpha" evidence="37">
    <location>
        <position position="848"/>
    </location>
</feature>
<feature type="splice variant" id="VSP_044280" description="In isoform 3 and isoform 4." evidence="39">
    <original>LAFEAIVKKQVVKLKEPCLKCVDLVIQELINTVRQCTS</original>
    <variation>MAFEAIVKKQIVKLKEPSLKCVDLVVSELATVIKKCAE</variation>
    <location>
        <begin position="407"/>
        <end position="444"/>
    </location>
</feature>
<feature type="splice variant" id="VSP_001325" description="In isoform 2 and isoform 3." evidence="39 40 43">
    <location>
        <begin position="516"/>
        <end position="519"/>
    </location>
</feature>
<feature type="splice variant" id="VSP_047534" description="In isoform 5." evidence="39">
    <location>
        <position position="848"/>
    </location>
</feature>
<feature type="sequence variant" id="VAR_031961" description="In dbSNP:rs3745674.">
    <original>P</original>
    <variation>L</variation>
    <location>
        <position position="263"/>
    </location>
</feature>
<feature type="sequence variant" id="VAR_068425" description="In CMT2M; dbSNP:rs267606772." evidence="21">
    <original>G</original>
    <variation>R</variation>
    <location>
        <position position="358"/>
    </location>
</feature>
<feature type="sequence variant" id="VAR_031962" description="In CNM1; dbSNP:rs121909092." evidence="12 27">
    <original>E</original>
    <variation>K</variation>
    <location>
        <position position="368"/>
    </location>
</feature>
<feature type="sequence variant" id="VAR_068365" description="In CNM1." evidence="17">
    <original>E</original>
    <variation>Q</variation>
    <location>
        <position position="368"/>
    </location>
</feature>
<feature type="sequence variant" id="VAR_031963" description="In CNM1; dbSNP:rs121909089." evidence="12">
    <original>R</original>
    <variation>Q</variation>
    <location>
        <position position="369"/>
    </location>
</feature>
<feature type="sequence variant" id="VAR_031964" description="In CNM1; reduced association with the centrosome; dbSNP:rs121909090." evidence="12">
    <original>R</original>
    <variation>W</variation>
    <location>
        <position position="369"/>
    </location>
</feature>
<feature type="sequence variant" id="VAR_070163" description="In LCCS5; hypomorphic mutation impacting on endocytosis; dbSNP:rs397514735." evidence="31">
    <original>F</original>
    <variation>V</variation>
    <location>
        <position position="379"/>
    </location>
</feature>
<feature type="sequence variant" id="VAR_031965" description="In CNM1; reduced association with the centrosome; COS7 cells show a reduced uptake of transferrin and low-density lipoprotein complex; decreases autophagosome maturation; does not affect endocytosis; does not affect the trafficking of ATG9A and ATG16L1; does not affect SNX18 interaction; increases cell membrane localization; increases interaction with ITSN1; impairs recruitment to phagophore assembly site; increases GTPase-mediated membrane fission; inhibits GTPase-mediated membrane fission by BIN1 in a dose-dependent manner; dbSNP:rs121909091." evidence="12 24 27 34 37">
    <original>R</original>
    <variation>W</variation>
    <location>
        <position position="465"/>
    </location>
</feature>
<feature type="sequence variant" id="VAR_068366" description="In CNM1; dbSNP:rs2072577342." evidence="30">
    <original>R</original>
    <variation>C</variation>
    <location>
        <position position="522"/>
    </location>
</feature>
<feature type="sequence variant" id="VAR_068367" description="In CNM1; dbSNP:rs587783595." evidence="27">
    <original>R</original>
    <variation>H</variation>
    <location>
        <position position="522"/>
    </location>
</feature>
<feature type="sequence variant" id="VAR_068368" description="In CNM1; dbSNP:rs587783596." evidence="30">
    <original>R</original>
    <variation>G</variation>
    <location>
        <position position="523"/>
    </location>
</feature>
<feature type="sequence variant" id="VAR_062574" description="In CMT2M; dbSNP:rs121909093." evidence="15">
    <original>G</original>
    <variation>C</variation>
    <location>
        <position position="537"/>
    </location>
</feature>
<feature type="sequence variant" id="VAR_031966" description="In CMTDIB and CNM1; may affect binding to vesicles and membranes in favor of binding to microtubules; may affect receptor-mediated endocytosis; does not affect binding to vesicles composed of 1-phosphatidyl-1D-myo-inositol 4,5-bisphosphate, stabilizes polymers; increases GTPase activity; becomes resistant to disassembly; does not induce the formation of high-order oligomers; increases tyrosine phosphorylation." evidence="11 36">
    <location>
        <begin position="555"/>
        <end position="557"/>
    </location>
</feature>
<feature type="sequence variant" id="VAR_068369" description="In CNM1; dbSNP:rs879254086." evidence="22">
    <original>E</original>
    <variation>K</variation>
    <location>
        <position position="560"/>
    </location>
</feature>
<feature type="sequence variant" id="VAR_031967" description="In CMTDIB and CNM1; with neutropenia; COS7 cells show a reduced uptake of transferrin and low-density lipoprotein complex; impairs PHD domain binding to vesicles composed of 1-phosphatidyl-1D-myo-inositol 4,5-bisphosphate; does not affect GTP- and salt-induced disassembly; does not induce the formation of high-order oligomers; does not affect phosphorylation; dbSNP:rs121909088." evidence="11 24 36">
    <original>K</original>
    <variation>E</variation>
    <location>
        <position position="562"/>
    </location>
</feature>
<feature type="sequence variant" id="VAR_070164" description="In CMTDIB; dbSNP:rs1599620408." evidence="11">
    <location>
        <position position="562"/>
    </location>
</feature>
<feature type="sequence variant" id="VAR_062575" description="In CMT2M; dbSNP:rs121909094." evidence="15">
    <original>L</original>
    <variation>H</variation>
    <location>
        <position position="570"/>
    </location>
</feature>
<feature type="sequence variant" id="VAR_068370" description="In CNM1; dbSNP:rs1555715869." evidence="25">
    <original>A</original>
    <variation>D</variation>
    <location>
        <position position="618"/>
    </location>
</feature>
<feature type="sequence variant" id="VAR_039041" description="In CNM1; severe; does not affect PHD domain binding to vesicles composed of and 1-phosphatidyl-1D-myo-inositol 4,5-bisphosphate; induces the formation of high-order oligomers; does not affect phosphorylation; increases GTPase-mediated membrane fission; inhibits GTPase-mediated membrane fission by BIN1 in a dose-dependent manner; dbSNP:rs773598203." evidence="18 27 36 37">
    <original>A</original>
    <variation>T</variation>
    <location>
        <position position="618"/>
    </location>
</feature>
<feature type="sequence variant" id="VAR_039042" description="In CNM1; severe; impairs BIN1-dependent T-tubule formation, zebrafish larval muscle show alteration of T-tubule organization; increases GTPase-mediated membrane fission; inhibits GTPase-mediated membrane fission by BIN1 in a dose-dependent manner; dbSNP:rs121909095." evidence="18 27 32 37">
    <original>S</original>
    <variation>L</variation>
    <location>
        <position position="619"/>
    </location>
</feature>
<feature type="sequence variant" id="VAR_039043" description="In CNM1; severe; dbSNP:rs121909095." evidence="18">
    <original>S</original>
    <variation>W</variation>
    <location>
        <position position="619"/>
    </location>
</feature>
<feature type="sequence variant" id="VAR_068371" description="In CNM1; centronuclear myopathy with cataracts; dbSNP:rs587783597." evidence="26">
    <original>L</original>
    <variation>P</variation>
    <location>
        <position position="621"/>
    </location>
</feature>
<feature type="sequence variant" id="VAR_039044" description="In CNM1; severe; COS7 cells show a reduced uptake of transferrin and low-density lipoprotein complex; increases GTPase-mediated membrane fission; inhibits GTPase-mediated membrane fission by BIN1 in a dose-dependent manner." evidence="18 24 37">
    <location>
        <position position="625"/>
    </location>
</feature>
<feature type="sequence variant" id="VAR_068372" description="In CNM1." evidence="27">
    <original>P</original>
    <variation>H</variation>
    <location>
        <position position="627"/>
    </location>
</feature>
<feature type="sequence variant" id="VAR_068373" description="In CNM1; dbSNP:rs587783598." evidence="30">
    <original>P</original>
    <variation>R</variation>
    <location>
        <position position="627"/>
    </location>
</feature>
<feature type="sequence variant" id="VAR_062576" description="In CNM1; COS7 cells show a reduced uptake of transferrin and low-density lipoprotein complex; dbSNP:rs2073098775." evidence="24">
    <original>E</original>
    <variation>K</variation>
    <location>
        <position position="650"/>
    </location>
</feature>
<feature type="mutagenesis site" description="Inhibits receptor-mediated endocytosis. Inhibits EGF-induced MAPK3 and MAPK1 activation." evidence="24">
    <original>K</original>
    <variation>A</variation>
    <location>
        <position position="44"/>
    </location>
</feature>
<feature type="mutagenesis site" description="Greatly reduces tyrosine phosphorylation; when associated with F-597." evidence="36">
    <original>Y</original>
    <variation>F</variation>
    <location>
        <position position="231"/>
    </location>
</feature>
<feature type="mutagenesis site" description="Abolishes interaction with MAP1LC3B. Does not affect interaction with ITSN1. Affects nascent autophagosome membranes. Does not affect the trafficking of ATG9A and ATG16L1. Does not affect SNX18 interaction. Decreases autophagosome maturation." evidence="34">
    <original>W</original>
    <variation>L</variation>
    <location>
        <position position="525"/>
    </location>
</feature>
<feature type="mutagenesis site" description="Greatly reduces tyrosine phosphorylation; when associated with F-231." evidence="36">
    <original>Y</original>
    <variation>F</variation>
    <location>
        <position position="597"/>
    </location>
</feature>
<feature type="mutagenesis site" description="Decreases receptor internalization." evidence="37">
    <original>S</original>
    <variation>A</variation>
    <location>
        <position position="848"/>
    </location>
</feature>
<feature type="mutagenesis site" description="Decreases binding affinity to BIN1. Increases GTPase mediated-membrane fission activity by BIN1. Decreases cell surface expression of SLC2A4." evidence="37">
    <original>S</original>
    <variation>E</variation>
    <location>
        <position position="848"/>
    </location>
</feature>
<feature type="sequence conflict" description="In Ref. 1; AAA88025." evidence="44" ref="1">
    <original>QI</original>
    <variation>RV</variation>
    <location>
        <begin position="155"/>
        <end position="156"/>
    </location>
</feature>
<feature type="sequence conflict" description="In Ref. 2; AK312260." evidence="44" ref="2">
    <original>L</original>
    <variation>P</variation>
    <location>
        <position position="207"/>
    </location>
</feature>
<feature type="sequence conflict" description="In Ref. 1; AAA88025." evidence="44" ref="1">
    <original>N</original>
    <variation>I</variation>
    <location>
        <position position="316"/>
    </location>
</feature>
<feature type="sequence conflict" description="In Ref. 1; AAA88025." evidence="44" ref="1">
    <original>R</original>
    <variation>P</variation>
    <location>
        <position position="324"/>
    </location>
</feature>
<feature type="sequence conflict" description="In Ref. 2; AK312260." evidence="44" ref="2">
    <original>I</original>
    <variation>T</variation>
    <location>
        <position position="475"/>
    </location>
</feature>
<feature type="strand" evidence="49">
    <location>
        <begin position="522"/>
        <end position="530"/>
    </location>
</feature>
<feature type="strand" evidence="49">
    <location>
        <begin position="533"/>
        <end position="535"/>
    </location>
</feature>
<feature type="strand" evidence="49">
    <location>
        <begin position="540"/>
        <end position="545"/>
    </location>
</feature>
<feature type="strand" evidence="49">
    <location>
        <begin position="550"/>
        <end position="555"/>
    </location>
</feature>
<feature type="strand" evidence="49">
    <location>
        <begin position="560"/>
        <end position="565"/>
    </location>
</feature>
<feature type="strand" evidence="49">
    <location>
        <begin position="567"/>
        <end position="573"/>
    </location>
</feature>
<feature type="strand" evidence="49">
    <location>
        <begin position="585"/>
        <end position="590"/>
    </location>
</feature>
<feature type="strand" evidence="49">
    <location>
        <begin position="596"/>
        <end position="599"/>
    </location>
</feature>
<feature type="strand" evidence="49">
    <location>
        <begin position="601"/>
        <end position="606"/>
    </location>
</feature>
<feature type="helix" evidence="49">
    <location>
        <begin position="610"/>
        <end position="623"/>
    </location>
</feature>
<name>DYN2_HUMAN</name>
<comment type="function">
    <text evidence="1 2 11 15 23 24 32 33 34 35 36 37">Catalyzes the hydrolysis of GTP and utilizes this energy to mediate vesicle scission at plasma membrane during endocytosis and filament remodeling at many actin structures during organization of the actin cytoskeleton (PubMed:15731758, PubMed:19605363, PubMed:19623537, PubMed:33713620, PubMed:34744632). Plays an important role in vesicular trafficking processes, namely clathrin-mediated endocytosis (CME), exocytic and clathrin-coated vesicle from the trans-Golgi network, and PDGF stimulated macropinocytosis (PubMed:15731758, PubMed:19623537, PubMed:33713620). During vesicular trafficking process, associates to the membrane, through lipid binding, and self-assembles into ring-like structure through oligomerization to form a helical polymer around the vesicle membrane and leading to vesicle scission (PubMed:17636067, PubMed:34744632, PubMed:36445308). Plays a role in organization of the actin cytoskeleton by mediating arrangement of stress fibers and actin bundles in podocytes (By similarity). During organization of the actin cytoskeleton, self-assembles into ring-like structure that directly bundles actin filaments to form typical membrane tubules decorated with dynamin spiral polymers (By similarity). Self-assembly increases GTPase activity and the GTP hydrolysis causes the rapid depolymerization of dynamin spiral polymers, and results in dispersion of actin bundles (By similarity). Remodels, through its interaction with CTTN, bundled actin filaments in a GTPase-dependent manner and plays a role in orchestrating the global actomyosin cytoskeleton (PubMed:19605363). The interaction with CTTN stabilizes the interaction of DNM2 and actin filaments and stimulates the intrinsic GTPase activity that results in actin filament-barbed ends and increases the sensitivity of filaments in bundles to the actin depolymerizing factor, CFL1 (By similarity). Plays a role in the autophagy process, by participating in the formation of ATG9A vesicles destined for the autophagosomes through its interaction with SNX18 (PubMed:29437695), by mediating recycling endosome scission leading to autophagosome release through MAP1LC3B interaction (PubMed:29437695, PubMed:32315611). Also regulates maturation of apoptotic cell corpse-containing phagosomes by recruiting PIK3C3 to the phagosome membrane (By similarity). Also plays a role in cytokinesis (By similarity). May participate in centrosome cohesion through its interaction with TUBG1 (By similarity). Plays a role in the regulation of neuron morphology, axon growth and formation of neuronal growth cones (By similarity). Involved in membrane tubulation (PubMed:24135484).</text>
</comment>
<comment type="catalytic activity">
    <reaction evidence="36">
        <text>GTP + H2O = GDP + phosphate + H(+)</text>
        <dbReference type="Rhea" id="RHEA:19669"/>
        <dbReference type="ChEBI" id="CHEBI:15377"/>
        <dbReference type="ChEBI" id="CHEBI:15378"/>
        <dbReference type="ChEBI" id="CHEBI:37565"/>
        <dbReference type="ChEBI" id="CHEBI:43474"/>
        <dbReference type="ChEBI" id="CHEBI:58189"/>
        <dbReference type="EC" id="3.6.5.5"/>
    </reaction>
    <physiologicalReaction direction="left-to-right" evidence="36">
        <dbReference type="Rhea" id="RHEA:19670"/>
    </physiologicalReaction>
</comment>
<comment type="subunit">
    <text evidence="1 2 8 10 13 14 16 19 20 29 33 34 36 37">Oligomerizes into a helical polymer that self-assembles around the vesicle membrane, when associated to the menbrane through lipid binding (PubMed:34744632, PubMed:36445308). Interacts with SHANK1 and SHANK2 (PubMed:11583995). Interacts with SNX9 (PubMed:15703209). Interacts (via C-terminal proline-rich domain (PRD)) with SNX18 (via SH3 domain); this interaction regulates ATG9A and ATG16L1 trafficking from recycling endosomes to sites of autophagosome formation (PubMed:29437695, PubMed:32315611). Interacts with SNX33 (via SH3 domain) (PubMed:18353773). Interacts with MYO1E (via SH3 domain) (PubMed:17257598). Interacts with PSTPIP1 (via SH3 domain) (PubMed:18480402). Interacts with CTNND2 (PubMed:22022388). Interacts (via C-terminal proline-rich domain (PRD)) with BIN1 (via SH3 domain); this interaction allows the recruitment of DNM2 to the membrane tubules and inhibits self-assembly-stimulated GTPase activity on the membrane (PubMed:17676042, PubMed:36445308). Interacts with GABARAP, GABARAPL1 and GABARAPL2 (PubMed:32315611). Interacts with MAP1LC3B (the lipidate and non-lipidated LC3 form); this interaction mediates recycling endosome scission leading to autophagosome release (PubMed:32315611). Interacts with ITSN1 (PubMed:32315611). Interacts (via C-terminal proline-rich domain (PRD)) with SH3BP4 (via SH3 domain); this interaction controls the GTPase activity and is prevented by EGFR-induced tyrosine phosphorylation of either DNM2 or SH3BP4 (PubMed:16325581). May interact with PIK3C3. May be a component of a complex composed of RAB5A (in GDP-bound form), DYN2 and PIK3C3. Interacts with SDC4; this interaction is markedly enhanced at focal ahesion site upon induction of focal adhesions and stress-fiber formation (By similarity). Interacts with ACTN1. Interacts with CTTN; this interaction stimulates the intrinsic GTPase activity of DNM2 and stabilizes the association of DNM2 and actin filaments; in addition this interaction is stimulated by ligand binding to the receptor, leading to the recruitment of the DNM2-CTTN complex to the sequestered receptor-ligand complex to its internalization. Interacts with NOSTRIN (via SH3 domain); this interaction allows the recruitment of NOS3 to dynamin-positive structures. Interacts with TUBG1; this interaction may participate in centrosome cohesion (By similarity).</text>
</comment>
<comment type="interaction">
    <interactant intactId="EBI-346547">
        <id>P50570</id>
    </interactant>
    <interactant intactId="EBI-1049056">
        <id>Q8N157</id>
        <label>AHI1</label>
    </interactant>
    <organismsDiffer>false</organismsDiffer>
    <experiments>2</experiments>
</comment>
<comment type="interaction">
    <interactant intactId="EBI-346547">
        <id>P50570</id>
    </interactant>
    <interactant intactId="EBI-747185">
        <id>O95817</id>
        <label>BAG3</label>
    </interactant>
    <organismsDiffer>false</organismsDiffer>
    <experiments>3</experiments>
</comment>
<comment type="interaction">
    <interactant intactId="EBI-346547">
        <id>P50570</id>
    </interactant>
    <interactant intactId="EBI-351886">
        <id>Q14247</id>
        <label>CTTN</label>
    </interactant>
    <organismsDiffer>false</organismsDiffer>
    <experiments>5</experiments>
</comment>
<comment type="interaction">
    <interactant intactId="EBI-346547">
        <id>P50570</id>
    </interactant>
    <interactant intactId="EBI-713135">
        <id>Q05193</id>
        <label>DNM1</label>
    </interactant>
    <organismsDiffer>false</organismsDiffer>
    <experiments>5</experiments>
</comment>
<comment type="interaction">
    <interactant intactId="EBI-346547">
        <id>P50570</id>
    </interactant>
    <interactant intactId="EBI-11526128">
        <id>Q8NFF5-2</id>
        <label>FLAD1</label>
    </interactant>
    <organismsDiffer>false</organismsDiffer>
    <experiments>3</experiments>
</comment>
<comment type="interaction">
    <interactant intactId="EBI-346547">
        <id>P50570</id>
    </interactant>
    <interactant intactId="EBI-401755">
        <id>P62993</id>
        <label>GRB2</label>
    </interactant>
    <organismsDiffer>false</organismsDiffer>
    <experiments>9</experiments>
</comment>
<comment type="interaction">
    <interactant intactId="EBI-346547">
        <id>P50570</id>
    </interactant>
    <interactant intactId="EBI-602041">
        <id>Q15811</id>
        <label>ITSN1</label>
    </interactant>
    <organismsDiffer>false</organismsDiffer>
    <experiments>2</experiments>
</comment>
<comment type="interaction">
    <interactant intactId="EBI-346547">
        <id>P50570</id>
    </interactant>
    <interactant intactId="EBI-4279548">
        <id>Q12965</id>
        <label>MYO1E</label>
    </interactant>
    <organismsDiffer>false</organismsDiffer>
    <experiments>2</experiments>
</comment>
<comment type="interaction">
    <interactant intactId="EBI-346547">
        <id>P50570</id>
    </interactant>
    <interactant intactId="EBI-713693">
        <id>P22392</id>
        <label>NME2</label>
    </interactant>
    <organismsDiffer>false</organismsDiffer>
    <experiments>2</experiments>
</comment>
<comment type="interaction">
    <interactant intactId="EBI-346547">
        <id>P50570</id>
    </interactant>
    <interactant intactId="EBI-742503">
        <id>Q9UNF0</id>
        <label>PACSIN2</label>
    </interactant>
    <organismsDiffer>false</organismsDiffer>
    <experiments>4</experiments>
</comment>
<comment type="interaction">
    <interactant intactId="EBI-346547">
        <id>P50570</id>
    </interactant>
    <interactant intactId="EBI-1383852">
        <id>P54646</id>
        <label>PRKAA2</label>
    </interactant>
    <organismsDiffer>false</organismsDiffer>
    <experiments>3</experiments>
</comment>
<comment type="interaction">
    <interactant intactId="EBI-346547">
        <id>P50570</id>
    </interactant>
    <interactant intactId="EBI-347462">
        <id>P47897</id>
        <label>QARS1</label>
    </interactant>
    <organismsDiffer>false</organismsDiffer>
    <experiments>3</experiments>
</comment>
<comment type="interaction">
    <interactant intactId="EBI-346547">
        <id>P50570</id>
    </interactant>
    <interactant intactId="EBI-373337">
        <id>O76064</id>
        <label>RNF8</label>
    </interactant>
    <organismsDiffer>false</organismsDiffer>
    <experiments>3</experiments>
</comment>
<comment type="interaction">
    <interactant intactId="EBI-346547">
        <id>P50570</id>
    </interactant>
    <interactant intactId="EBI-727004">
        <id>O00560</id>
        <label>SDCBP</label>
    </interactant>
    <organismsDiffer>false</organismsDiffer>
    <experiments>3</experiments>
</comment>
<comment type="interaction">
    <interactant intactId="EBI-346547">
        <id>P50570</id>
    </interactant>
    <interactant intactId="EBI-81088">
        <id>Q15436</id>
        <label>SEC23A</label>
    </interactant>
    <organismsDiffer>false</organismsDiffer>
    <experiments>3</experiments>
</comment>
<comment type="interaction">
    <interactant intactId="EBI-346547">
        <id>P50570</id>
    </interactant>
    <interactant intactId="EBI-1049513">
        <id>Q9P0V3</id>
        <label>SH3BP4</label>
    </interactant>
    <organismsDiffer>false</organismsDiffer>
    <experiments>3</experiments>
</comment>
<comment type="interaction">
    <interactant intactId="EBI-346547">
        <id>P50570</id>
    </interactant>
    <interactant intactId="EBI-77938">
        <id>Q99962</id>
        <label>SH3GL2</label>
    </interactant>
    <organismsDiffer>false</organismsDiffer>
    <experiments>2</experiments>
</comment>
<comment type="interaction">
    <interactant intactId="EBI-346547">
        <id>P50570</id>
    </interactant>
    <interactant intactId="EBI-346595">
        <id>Q96B97</id>
        <label>SH3KBP1</label>
    </interactant>
    <organismsDiffer>false</organismsDiffer>
    <experiments>5</experiments>
</comment>
<comment type="interaction">
    <interactant intactId="EBI-346547">
        <id>P50570</id>
    </interactant>
    <interactant intactId="EBI-2481535">
        <id>Q8WV41</id>
        <label>SNX33</label>
    </interactant>
    <organismsDiffer>false</organismsDiffer>
    <experiments>4</experiments>
</comment>
<comment type="interaction">
    <interactant intactId="EBI-346547">
        <id>P50570</id>
    </interactant>
    <interactant intactId="EBI-77848">
        <id>Q9Y5X1</id>
        <label>SNX9</label>
    </interactant>
    <organismsDiffer>false</organismsDiffer>
    <experiments>7</experiments>
</comment>
<comment type="interaction">
    <interactant intactId="EBI-346547">
        <id>P50570</id>
    </interactant>
    <interactant intactId="EBI-3650647">
        <id>Q9BUZ4</id>
        <label>TRAF4</label>
    </interactant>
    <organismsDiffer>false</organismsDiffer>
    <experiments>3</experiments>
</comment>
<comment type="interaction">
    <interactant intactId="EBI-346547">
        <id>P50570</id>
    </interactant>
    <interactant intactId="EBI-7353612">
        <id>P57075-2</id>
        <label>UBASH3A</label>
    </interactant>
    <organismsDiffer>false</organismsDiffer>
    <experiments>3</experiments>
</comment>
<comment type="interaction">
    <interactant intactId="EBI-346547">
        <id>P50570</id>
    </interactant>
    <interactant intactId="EBI-7355146">
        <id>Q9QPN3</id>
        <label>nef</label>
    </interactant>
    <organismsDiffer>true</organismsDiffer>
    <experiments>4</experiments>
</comment>
<comment type="interaction">
    <interactant intactId="EBI-10968534">
        <id>P50570-2</id>
    </interactant>
    <interactant intactId="EBI-10308705">
        <id>Q9H7C9</id>
        <label>AAMDC</label>
    </interactant>
    <organismsDiffer>false</organismsDiffer>
    <experiments>3</experiments>
</comment>
<comment type="interaction">
    <interactant intactId="EBI-10968534">
        <id>P50570-2</id>
    </interactant>
    <interactant intactId="EBI-22011868">
        <id>Q6PCB6</id>
        <label>ABHD17C</label>
    </interactant>
    <organismsDiffer>false</organismsDiffer>
    <experiments>3</experiments>
</comment>
<comment type="interaction">
    <interactant intactId="EBI-10968534">
        <id>P50570-2</id>
    </interactant>
    <interactant intactId="EBI-2875816">
        <id>Q9NP61</id>
        <label>ARFGAP3</label>
    </interactant>
    <organismsDiffer>false</organismsDiffer>
    <experiments>3</experiments>
</comment>
<comment type="interaction">
    <interactant intactId="EBI-10968534">
        <id>P50570-2</id>
    </interactant>
    <interactant intactId="EBI-25844820">
        <id>Q86TN1</id>
        <label>ARNT2</label>
    </interactant>
    <organismsDiffer>false</organismsDiffer>
    <experiments>3</experiments>
</comment>
<comment type="interaction">
    <interactant intactId="EBI-10968534">
        <id>P50570-2</id>
    </interactant>
    <interactant intactId="EBI-25838672">
        <id>Q9NWX5-2</id>
        <label>ASB6</label>
    </interactant>
    <organismsDiffer>false</organismsDiffer>
    <experiments>3</experiments>
</comment>
<comment type="interaction">
    <interactant intactId="EBI-10968534">
        <id>P50570-2</id>
    </interactant>
    <interactant intactId="EBI-9089489">
        <id>Q96FT7-4</id>
        <label>ASIC4</label>
    </interactant>
    <organismsDiffer>false</organismsDiffer>
    <experiments>3</experiments>
</comment>
<comment type="interaction">
    <interactant intactId="EBI-10968534">
        <id>P50570-2</id>
    </interactant>
    <interactant intactId="EBI-2410266">
        <id>Q8WXF7</id>
        <label>ATL1</label>
    </interactant>
    <organismsDiffer>false</organismsDiffer>
    <experiments>3</experiments>
</comment>
<comment type="interaction">
    <interactant intactId="EBI-10968534">
        <id>P50570-2</id>
    </interactant>
    <interactant intactId="EBI-718459">
        <id>Q9UII2</id>
        <label>ATP5IF1</label>
    </interactant>
    <organismsDiffer>false</organismsDiffer>
    <experiments>3</experiments>
</comment>
<comment type="interaction">
    <interactant intactId="EBI-10968534">
        <id>P50570-2</id>
    </interactant>
    <interactant intactId="EBI-946046">
        <id>P54252</id>
        <label>ATXN3</label>
    </interactant>
    <organismsDiffer>false</organismsDiffer>
    <experiments>3</experiments>
</comment>
<comment type="interaction">
    <interactant intactId="EBI-10968534">
        <id>P50570-2</id>
    </interactant>
    <interactant intactId="EBI-9092016">
        <id>Q9UQB8-6</id>
        <label>BAIAP2</label>
    </interactant>
    <organismsDiffer>false</organismsDiffer>
    <experiments>3</experiments>
</comment>
<comment type="interaction">
    <interactant intactId="EBI-10968534">
        <id>P50570-2</id>
    </interactant>
    <interactant intactId="EBI-7105206">
        <id>Q9UMX3</id>
        <label>BOK</label>
    </interactant>
    <organismsDiffer>false</organismsDiffer>
    <experiments>3</experiments>
</comment>
<comment type="interaction">
    <interactant intactId="EBI-10968534">
        <id>P50570-2</id>
    </interactant>
    <interactant intactId="EBI-2837444">
        <id>Q8WUW1</id>
        <label>BRK1</label>
    </interactant>
    <organismsDiffer>false</organismsDiffer>
    <experiments>3</experiments>
</comment>
<comment type="interaction">
    <interactant intactId="EBI-10968534">
        <id>P50570-2</id>
    </interactant>
    <interactant intactId="EBI-78129">
        <id>P83916</id>
        <label>CBX1</label>
    </interactant>
    <organismsDiffer>false</organismsDiffer>
    <experiments>3</experiments>
</comment>
<comment type="interaction">
    <interactant intactId="EBI-10968534">
        <id>P50570-2</id>
    </interactant>
    <interactant intactId="EBI-747776">
        <id>Q53EZ4</id>
        <label>CEP55</label>
    </interactant>
    <organismsDiffer>false</organismsDiffer>
    <experiments>3</experiments>
</comment>
<comment type="interaction">
    <interactant intactId="EBI-10968534">
        <id>P50570-2</id>
    </interactant>
    <interactant intactId="EBI-1049648">
        <id>Q96FZ7</id>
        <label>CHMP6</label>
    </interactant>
    <organismsDiffer>false</organismsDiffer>
    <experiments>3</experiments>
</comment>
<comment type="interaction">
    <interactant intactId="EBI-10968534">
        <id>P50570-2</id>
    </interactant>
    <interactant intactId="EBI-617866">
        <id>Q9NSE2</id>
        <label>CISH</label>
    </interactant>
    <organismsDiffer>false</organismsDiffer>
    <experiments>3</experiments>
</comment>
<comment type="interaction">
    <interactant intactId="EBI-10968534">
        <id>P50570-2</id>
    </interactant>
    <interactant intactId="EBI-13350535">
        <id>Q92478</id>
        <label>CLEC2B</label>
    </interactant>
    <organismsDiffer>false</organismsDiffer>
    <experiments>3</experiments>
</comment>
<comment type="interaction">
    <interactant intactId="EBI-10968534">
        <id>P50570-2</id>
    </interactant>
    <interactant intactId="EBI-1056029">
        <id>Q16740</id>
        <label>CLPP</label>
    </interactant>
    <organismsDiffer>false</organismsDiffer>
    <experiments>3</experiments>
</comment>
<comment type="interaction">
    <interactant intactId="EBI-10968534">
        <id>P50570-2</id>
    </interactant>
    <interactant intactId="EBI-1809826">
        <id>P04141</id>
        <label>CSF2</label>
    </interactant>
    <organismsDiffer>false</organismsDiffer>
    <experiments>3</experiments>
</comment>
<comment type="interaction">
    <interactant intactId="EBI-10968534">
        <id>P50570-2</id>
    </interactant>
    <interactant intactId="EBI-25830216">
        <id>Q9NR90-2</id>
        <label>DAZ3</label>
    </interactant>
    <organismsDiffer>false</organismsDiffer>
    <experiments>3</experiments>
</comment>
<comment type="interaction">
    <interactant intactId="EBI-10968534">
        <id>P50570-2</id>
    </interactant>
    <interactant intactId="EBI-3508943">
        <id>Q9H816</id>
        <label>DCLRE1B</label>
    </interactant>
    <organismsDiffer>false</organismsDiffer>
    <experiments>3</experiments>
</comment>
<comment type="interaction">
    <interactant intactId="EBI-10968534">
        <id>P50570-2</id>
    </interactant>
    <interactant intactId="EBI-347658">
        <id>Q9UHI6</id>
        <label>DDX20</label>
    </interactant>
    <organismsDiffer>false</organismsDiffer>
    <experiments>3</experiments>
</comment>
<comment type="interaction">
    <interactant intactId="EBI-10968534">
        <id>P50570-2</id>
    </interactant>
    <interactant intactId="EBI-2805660">
        <id>Q14154</id>
        <label>DELE1</label>
    </interactant>
    <organismsDiffer>false</organismsDiffer>
    <experiments>3</experiments>
</comment>
<comment type="interaction">
    <interactant intactId="EBI-10968534">
        <id>P50570-2</id>
    </interactant>
    <interactant intactId="EBI-2795449">
        <id>Q9H147</id>
        <label>DNTTIP1</label>
    </interactant>
    <organismsDiffer>false</organismsDiffer>
    <experiments>3</experiments>
</comment>
<comment type="interaction">
    <interactant intactId="EBI-10968534">
        <id>P50570-2</id>
    </interactant>
    <interactant intactId="EBI-6448852">
        <id>Q9UI08-2</id>
        <label>EVL</label>
    </interactant>
    <organismsDiffer>false</organismsDiffer>
    <experiments>3</experiments>
</comment>
<comment type="interaction">
    <interactant intactId="EBI-10968534">
        <id>P50570-2</id>
    </interactant>
    <interactant intactId="EBI-9089567">
        <id>Q99504</id>
        <label>EYA3</label>
    </interactant>
    <organismsDiffer>false</organismsDiffer>
    <experiments>3</experiments>
</comment>
<comment type="interaction">
    <interactant intactId="EBI-10968534">
        <id>P50570-2</id>
    </interactant>
    <interactant intactId="EBI-6309082">
        <id>Q6SJ93</id>
        <label>FAM111B</label>
    </interactant>
    <organismsDiffer>false</organismsDiffer>
    <experiments>3</experiments>
</comment>
<comment type="interaction">
    <interactant intactId="EBI-10968534">
        <id>P50570-2</id>
    </interactant>
    <interactant intactId="EBI-2869903">
        <id>Q9UKA2</id>
        <label>FBXL4</label>
    </interactant>
    <organismsDiffer>false</organismsDiffer>
    <experiments>3</experiments>
</comment>
<comment type="interaction">
    <interactant intactId="EBI-10968534">
        <id>P50570-2</id>
    </interactant>
    <interactant intactId="EBI-2506081">
        <id>Q6P3S6</id>
        <label>FBXO42</label>
    </interactant>
    <organismsDiffer>false</organismsDiffer>
    <experiments>3</experiments>
</comment>
<comment type="interaction">
    <interactant intactId="EBI-10968534">
        <id>P50570-2</id>
    </interactant>
    <interactant intactId="EBI-396453">
        <id>Q9UHY8</id>
        <label>FEZ2</label>
    </interactant>
    <organismsDiffer>false</organismsDiffer>
    <experiments>3</experiments>
</comment>
<comment type="interaction">
    <interactant intactId="EBI-10968534">
        <id>P50570-2</id>
    </interactant>
    <interactant intactId="EBI-25830360">
        <id>Q9Y261-2</id>
        <label>FOXA2</label>
    </interactant>
    <organismsDiffer>false</organismsDiffer>
    <experiments>3</experiments>
</comment>
<comment type="interaction">
    <interactant intactId="EBI-10968534">
        <id>P50570-2</id>
    </interactant>
    <interactant intactId="EBI-10253815">
        <id>Q6PIV2</id>
        <label>FOXR1</label>
    </interactant>
    <organismsDiffer>false</organismsDiffer>
    <experiments>3</experiments>
</comment>
<comment type="interaction">
    <interactant intactId="EBI-10968534">
        <id>P50570-2</id>
    </interactant>
    <interactant intactId="EBI-713279">
        <id>P02792</id>
        <label>FTL</label>
    </interactant>
    <organismsDiffer>false</organismsDiffer>
    <experiments>3</experiments>
</comment>
<comment type="interaction">
    <interactant intactId="EBI-10968534">
        <id>P50570-2</id>
    </interactant>
    <interactant intactId="EBI-10691738">
        <id>P06241-3</id>
        <label>FYN</label>
    </interactant>
    <organismsDiffer>false</organismsDiffer>
    <experiments>3</experiments>
</comment>
<comment type="interaction">
    <interactant intactId="EBI-10968534">
        <id>P50570-2</id>
    </interactant>
    <interactant intactId="EBI-2466380">
        <id>Q9ULV1</id>
        <label>FZD4</label>
    </interactant>
    <organismsDiffer>false</organismsDiffer>
    <experiments>3</experiments>
</comment>
<comment type="interaction">
    <interactant intactId="EBI-10968534">
        <id>P50570-2</id>
    </interactant>
    <interactant intactId="EBI-4403434">
        <id>Q9H4A5</id>
        <label>GOLPH3L</label>
    </interactant>
    <organismsDiffer>false</organismsDiffer>
    <experiments>3</experiments>
</comment>
<comment type="interaction">
    <interactant intactId="EBI-10968534">
        <id>P50570-2</id>
    </interactant>
    <interactant intactId="EBI-2847510">
        <id>Q13588</id>
        <label>GRAP</label>
    </interactant>
    <organismsDiffer>false</organismsDiffer>
    <experiments>3</experiments>
</comment>
<comment type="interaction">
    <interactant intactId="EBI-10968534">
        <id>P50570-2</id>
    </interactant>
    <interactant intactId="EBI-1199859">
        <id>P0C0S5</id>
        <label>H2AZ1</label>
    </interactant>
    <organismsDiffer>false</organismsDiffer>
    <experiments>3</experiments>
</comment>
<comment type="interaction">
    <interactant intactId="EBI-10968534">
        <id>P50570-2</id>
    </interactant>
    <interactant intactId="EBI-79722">
        <id>P68431</id>
        <label>H3C12</label>
    </interactant>
    <organismsDiffer>false</organismsDiffer>
    <experiments>3</experiments>
</comment>
<comment type="interaction">
    <interactant intactId="EBI-10968534">
        <id>P50570-2</id>
    </interactant>
    <interactant intactId="EBI-2965780">
        <id>P52790</id>
        <label>HK3</label>
    </interactant>
    <organismsDiffer>false</organismsDiffer>
    <experiments>3</experiments>
</comment>
<comment type="interaction">
    <interactant intactId="EBI-10968534">
        <id>P50570-2</id>
    </interactant>
    <interactant intactId="EBI-25845242">
        <id>Q8WVV9-3</id>
        <label>HNRNPLL</label>
    </interactant>
    <organismsDiffer>false</organismsDiffer>
    <experiments>3</experiments>
</comment>
<comment type="interaction">
    <interactant intactId="EBI-10968534">
        <id>P50570-2</id>
    </interactant>
    <interactant intactId="EBI-3923226">
        <id>P09017</id>
        <label>HOXC4</label>
    </interactant>
    <organismsDiffer>false</organismsDiffer>
    <experiments>3</experiments>
</comment>
<comment type="interaction">
    <interactant intactId="EBI-10968534">
        <id>P50570-2</id>
    </interactant>
    <interactant intactId="EBI-466029">
        <id>P42858</id>
        <label>HTT</label>
    </interactant>
    <organismsDiffer>false</organismsDiffer>
    <experiments>6</experiments>
</comment>
<comment type="interaction">
    <interactant intactId="EBI-10968534">
        <id>P50570-2</id>
    </interactant>
    <interactant intactId="EBI-21911304">
        <id>Q6DN90-2</id>
        <label>IQSEC1</label>
    </interactant>
    <organismsDiffer>false</organismsDiffer>
    <experiments>3</experiments>
</comment>
<comment type="interaction">
    <interactant intactId="EBI-10968534">
        <id>P50570-2</id>
    </interactant>
    <interactant intactId="EBI-10220600">
        <id>Q8NA54</id>
        <label>IQUB</label>
    </interactant>
    <organismsDiffer>false</organismsDiffer>
    <experiments>3</experiments>
</comment>
<comment type="interaction">
    <interactant intactId="EBI-10968534">
        <id>P50570-2</id>
    </interactant>
    <interactant intactId="EBI-399080">
        <id>Q92993</id>
        <label>KAT5</label>
    </interactant>
    <organismsDiffer>false</organismsDiffer>
    <experiments>3</experiments>
</comment>
<comment type="interaction">
    <interactant intactId="EBI-10968534">
        <id>P50570-2</id>
    </interactant>
    <interactant intactId="EBI-20795332">
        <id>Q92993-2</id>
        <label>KAT5</label>
    </interactant>
    <organismsDiffer>false</organismsDiffer>
    <experiments>3</experiments>
</comment>
<comment type="interaction">
    <interactant intactId="EBI-10968534">
        <id>P50570-2</id>
    </interactant>
    <interactant intactId="EBI-25844799">
        <id>A1A512</id>
        <label>KIAA0355</label>
    </interactant>
    <organismsDiffer>false</organismsDiffer>
    <experiments>3</experiments>
</comment>
<comment type="interaction">
    <interactant intactId="EBI-10968534">
        <id>P50570-2</id>
    </interactant>
    <interactant intactId="EBI-10241252">
        <id>Q3SY46</id>
        <label>KRTAP13-3</label>
    </interactant>
    <organismsDiffer>false</organismsDiffer>
    <experiments>3</experiments>
</comment>
<comment type="interaction">
    <interactant intactId="EBI-10968534">
        <id>P50570-2</id>
    </interactant>
    <interactant intactId="EBI-12811111">
        <id>Q8IUB9</id>
        <label>KRTAP19-1</label>
    </interactant>
    <organismsDiffer>false</organismsDiffer>
    <experiments>3</experiments>
</comment>
<comment type="interaction">
    <interactant intactId="EBI-10968534">
        <id>P50570-2</id>
    </interactant>
    <interactant intactId="EBI-1048945">
        <id>Q3LI72</id>
        <label>KRTAP19-5</label>
    </interactant>
    <organismsDiffer>false</organismsDiffer>
    <experiments>3</experiments>
</comment>
<comment type="interaction">
    <interactant intactId="EBI-10968534">
        <id>P50570-2</id>
    </interactant>
    <interactant intactId="EBI-10241353">
        <id>Q3SYF9</id>
        <label>KRTAP19-7</label>
    </interactant>
    <organismsDiffer>false</organismsDiffer>
    <experiments>3</experiments>
</comment>
<comment type="interaction">
    <interactant intactId="EBI-10968534">
        <id>P50570-2</id>
    </interactant>
    <interactant intactId="EBI-10261141">
        <id>Q8IUC2</id>
        <label>KRTAP8-1</label>
    </interactant>
    <organismsDiffer>false</organismsDiffer>
    <experiments>3</experiments>
</comment>
<comment type="interaction">
    <interactant intactId="EBI-10968534">
        <id>P50570-2</id>
    </interactant>
    <interactant intactId="EBI-9088829">
        <id>Q6DKI2</id>
        <label>LGALS9C</label>
    </interactant>
    <organismsDiffer>false</organismsDiffer>
    <experiments>3</experiments>
</comment>
<comment type="interaction">
    <interactant intactId="EBI-10968534">
        <id>P50570-2</id>
    </interactant>
    <interactant intactId="EBI-9088215">
        <id>A2RU56</id>
        <label>LOC401296</label>
    </interactant>
    <organismsDiffer>false</organismsDiffer>
    <experiments>3</experiments>
</comment>
<comment type="interaction">
    <interactant intactId="EBI-10968534">
        <id>P50570-2</id>
    </interactant>
    <interactant intactId="EBI-10241801">
        <id>Q4G0S1</id>
        <label>LOC730441</label>
    </interactant>
    <organismsDiffer>false</organismsDiffer>
    <experiments>3</experiments>
</comment>
<comment type="interaction">
    <interactant intactId="EBI-10968534">
        <id>P50570-2</id>
    </interactant>
    <interactant intactId="EBI-79452">
        <id>P07948</id>
        <label>LYN</label>
    </interactant>
    <organismsDiffer>false</organismsDiffer>
    <experiments>3</experiments>
</comment>
<comment type="interaction">
    <interactant intactId="EBI-10968534">
        <id>P50570-2</id>
    </interactant>
    <interactant intactId="EBI-77889">
        <id>Q9UI95</id>
        <label>MAD2L2</label>
    </interactant>
    <organismsDiffer>false</organismsDiffer>
    <experiments>3</experiments>
</comment>
<comment type="interaction">
    <interactant intactId="EBI-10968534">
        <id>P50570-2</id>
    </interactant>
    <interactant intactId="EBI-12056869">
        <id>Q9UDY8-2</id>
        <label>MALT1</label>
    </interactant>
    <organismsDiffer>false</organismsDiffer>
    <experiments>3</experiments>
</comment>
<comment type="interaction">
    <interactant intactId="EBI-10968534">
        <id>P50570-2</id>
    </interactant>
    <interactant intactId="EBI-476263">
        <id>Q99683</id>
        <label>MAP3K5</label>
    </interactant>
    <organismsDiffer>false</organismsDiffer>
    <experiments>3</experiments>
</comment>
<comment type="interaction">
    <interactant intactId="EBI-10968534">
        <id>P50570-2</id>
    </interactant>
    <interactant intactId="EBI-298304">
        <id>Q15759</id>
        <label>MAPK11</label>
    </interactant>
    <organismsDiffer>false</organismsDiffer>
    <experiments>3</experiments>
</comment>
<comment type="interaction">
    <interactant intactId="EBI-10968534">
        <id>P50570-2</id>
    </interactant>
    <interactant intactId="EBI-4397720">
        <id>Q8TDB4</id>
        <label>MGARP</label>
    </interactant>
    <organismsDiffer>false</organismsDiffer>
    <experiments>3</experiments>
</comment>
<comment type="interaction">
    <interactant intactId="EBI-10968534">
        <id>P50570-2</id>
    </interactant>
    <interactant intactId="EBI-2829677">
        <id>P41218</id>
        <label>MNDA</label>
    </interactant>
    <organismsDiffer>false</organismsDiffer>
    <experiments>3</experiments>
</comment>
<comment type="interaction">
    <interactant intactId="EBI-10968534">
        <id>P50570-2</id>
    </interactant>
    <interactant intactId="EBI-995714">
        <id>Q9Y605</id>
        <label>MRFAP1</label>
    </interactant>
    <organismsDiffer>false</organismsDiffer>
    <experiments>3</experiments>
</comment>
<comment type="interaction">
    <interactant intactId="EBI-10968534">
        <id>P50570-2</id>
    </interactant>
    <interactant intactId="EBI-25844576">
        <id>O43196-2</id>
        <label>MSH5</label>
    </interactant>
    <organismsDiffer>false</organismsDiffer>
    <experiments>3</experiments>
</comment>
<comment type="interaction">
    <interactant intactId="EBI-10968534">
        <id>P50570-2</id>
    </interactant>
    <interactant intactId="EBI-8645631">
        <id>Q99457</id>
        <label>NAP1L3</label>
    </interactant>
    <organismsDiffer>false</organismsDiffer>
    <experiments>3</experiments>
</comment>
<comment type="interaction">
    <interactant intactId="EBI-10968534">
        <id>P50570-2</id>
    </interactant>
    <interactant intactId="EBI-2880203">
        <id>O76041</id>
        <label>NEBL</label>
    </interactant>
    <organismsDiffer>false</organismsDiffer>
    <experiments>3</experiments>
</comment>
<comment type="interaction">
    <interactant intactId="EBI-10968534">
        <id>P50570-2</id>
    </interactant>
    <interactant intactId="EBI-3910729">
        <id>Q15466</id>
        <label>NR0B2</label>
    </interactant>
    <organismsDiffer>false</organismsDiffer>
    <experiments>3</experiments>
</comment>
<comment type="interaction">
    <interactant intactId="EBI-10968534">
        <id>P50570-2</id>
    </interactant>
    <interactant intactId="EBI-10698339">
        <id>Q9NPJ8-3</id>
        <label>NXT2</label>
    </interactant>
    <organismsDiffer>false</organismsDiffer>
    <experiments>3</experiments>
</comment>
<comment type="interaction">
    <interactant intactId="EBI-10968534">
        <id>P50570-2</id>
    </interactant>
    <interactant intactId="EBI-2903088">
        <id>Q16625</id>
        <label>OCLN</label>
    </interactant>
    <organismsDiffer>false</organismsDiffer>
    <experiments>3</experiments>
</comment>
<comment type="interaction">
    <interactant intactId="EBI-10968534">
        <id>P50570-2</id>
    </interactant>
    <interactant intactId="EBI-9091423">
        <id>Q96CV9-2</id>
        <label>OPTN</label>
    </interactant>
    <organismsDiffer>false</organismsDiffer>
    <experiments>3</experiments>
</comment>
<comment type="interaction">
    <interactant intactId="EBI-10968534">
        <id>P50570-2</id>
    </interactant>
    <interactant intactId="EBI-1058491">
        <id>Q96FW1</id>
        <label>OTUB1</label>
    </interactant>
    <organismsDiffer>false</organismsDiffer>
    <experiments>3</experiments>
</comment>
<comment type="interaction">
    <interactant intactId="EBI-10968534">
        <id>P50570-2</id>
    </interactant>
    <interactant intactId="EBI-10182841">
        <id>O15460-2</id>
        <label>P4HA2</label>
    </interactant>
    <organismsDiffer>false</organismsDiffer>
    <experiments>3</experiments>
</comment>
<comment type="interaction">
    <interactant intactId="EBI-10968534">
        <id>P50570-2</id>
    </interactant>
    <interactant intactId="EBI-1164361">
        <id>Q99497</id>
        <label>PARK7</label>
    </interactant>
    <organismsDiffer>false</organismsDiffer>
    <experiments>3</experiments>
</comment>
<comment type="interaction">
    <interactant intactId="EBI-10968534">
        <id>P50570-2</id>
    </interactant>
    <interactant intactId="EBI-716063">
        <id>Q13113</id>
        <label>PDZK1IP1</label>
    </interactant>
    <organismsDiffer>false</organismsDiffer>
    <experiments>3</experiments>
</comment>
<comment type="interaction">
    <interactant intactId="EBI-10968534">
        <id>P50570-2</id>
    </interactant>
    <interactant intactId="EBI-25844430">
        <id>O14813</id>
        <label>PHOX2A</label>
    </interactant>
    <organismsDiffer>false</organismsDiffer>
    <experiments>3</experiments>
</comment>
<comment type="interaction">
    <interactant intactId="EBI-10968534">
        <id>P50570-2</id>
    </interactant>
    <interactant intactId="EBI-9090282">
        <id>P27986-2</id>
        <label>PIK3R1</label>
    </interactant>
    <organismsDiffer>false</organismsDiffer>
    <experiments>3</experiments>
</comment>
<comment type="interaction">
    <interactant intactId="EBI-10968534">
        <id>P50570-2</id>
    </interactant>
    <interactant intactId="EBI-1049746">
        <id>P12273</id>
        <label>PIP</label>
    </interactant>
    <organismsDiffer>false</organismsDiffer>
    <experiments>3</experiments>
</comment>
<comment type="interaction">
    <interactant intactId="EBI-10968534">
        <id>P50570-2</id>
    </interactant>
    <interactant intactId="EBI-527417">
        <id>Q96J94</id>
        <label>PIWIL1</label>
    </interactant>
    <organismsDiffer>false</organismsDiffer>
    <experiments>3</experiments>
</comment>
<comment type="interaction">
    <interactant intactId="EBI-10968534">
        <id>P50570-2</id>
    </interactant>
    <interactant intactId="EBI-25829882">
        <id>O75626-3</id>
        <label>PRDM1</label>
    </interactant>
    <organismsDiffer>false</organismsDiffer>
    <experiments>3</experiments>
</comment>
<comment type="interaction">
    <interactant intactId="EBI-10968534">
        <id>P50570-2</id>
    </interactant>
    <interactant intactId="EBI-722275">
        <id>Q15286</id>
        <label>RAB35</label>
    </interactant>
    <organismsDiffer>false</organismsDiffer>
    <experiments>3</experiments>
</comment>
<comment type="interaction">
    <interactant intactId="EBI-10968534">
        <id>P50570-2</id>
    </interactant>
    <interactant intactId="EBI-6552718">
        <id>P57729</id>
        <label>RAB38</label>
    </interactant>
    <organismsDiffer>false</organismsDiffer>
    <experiments>3</experiments>
</comment>
<comment type="interaction">
    <interactant intactId="EBI-10968534">
        <id>P50570-2</id>
    </interactant>
    <interactant intactId="EBI-11984839">
        <id>Q96QF0-7</id>
        <label>RAB3IP</label>
    </interactant>
    <organismsDiffer>false</organismsDiffer>
    <experiments>3</experiments>
</comment>
<comment type="interaction">
    <interactant intactId="EBI-10968534">
        <id>P50570-2</id>
    </interactant>
    <interactant intactId="EBI-438710">
        <id>Q9NS23-4</id>
        <label>RASSF1</label>
    </interactant>
    <organismsDiffer>false</organismsDiffer>
    <experiments>3</experiments>
</comment>
<comment type="interaction">
    <interactant intactId="EBI-10968534">
        <id>P50570-2</id>
    </interactant>
    <interactant intactId="EBI-2856313">
        <id>Q9GZR2</id>
        <label>REXO4</label>
    </interactant>
    <organismsDiffer>false</organismsDiffer>
    <experiments>3</experiments>
</comment>
<comment type="interaction">
    <interactant intactId="EBI-10968534">
        <id>P50570-2</id>
    </interactant>
    <interactant intactId="EBI-743938">
        <id>Q96D59</id>
        <label>RNF183</label>
    </interactant>
    <organismsDiffer>false</organismsDiffer>
    <experiments>3</experiments>
</comment>
<comment type="interaction">
    <interactant intactId="EBI-10968534">
        <id>P50570-2</id>
    </interactant>
    <interactant intactId="EBI-25837959">
        <id>Q9BY12-3</id>
        <label>SCAPER</label>
    </interactant>
    <organismsDiffer>false</organismsDiffer>
    <experiments>3</experiments>
</comment>
<comment type="interaction">
    <interactant intactId="EBI-10968534">
        <id>P50570-2</id>
    </interactant>
    <interactant intactId="EBI-10182463">
        <id>Q2NKQ1-4</id>
        <label>SGSM1</label>
    </interactant>
    <organismsDiffer>false</organismsDiffer>
    <experiments>3</experiments>
</comment>
<comment type="interaction">
    <interactant intactId="EBI-10968534">
        <id>P50570-2</id>
    </interactant>
    <interactant intactId="EBI-25845274">
        <id>Q9NQ40</id>
        <label>SLC52A3</label>
    </interactant>
    <organismsDiffer>false</organismsDiffer>
    <experiments>3</experiments>
</comment>
<comment type="interaction">
    <interactant intactId="EBI-10968534">
        <id>P50570-2</id>
    </interactant>
    <interactant intactId="EBI-358419">
        <id>Q12824</id>
        <label>SMARCB1</label>
    </interactant>
    <organismsDiffer>false</organismsDiffer>
    <experiments>3</experiments>
</comment>
<comment type="interaction">
    <interactant intactId="EBI-10968534">
        <id>P50570-2</id>
    </interactant>
    <interactant intactId="EBI-358436">
        <id>Q12824-2</id>
        <label>SMARCB1</label>
    </interactant>
    <organismsDiffer>false</organismsDiffer>
    <experiments>3</experiments>
</comment>
<comment type="interaction">
    <interactant intactId="EBI-10968534">
        <id>P50570-2</id>
    </interactant>
    <interactant intactId="EBI-395447">
        <id>Q16637-3</id>
        <label>SMN2</label>
    </interactant>
    <organismsDiffer>false</organismsDiffer>
    <experiments>3</experiments>
</comment>
<comment type="interaction">
    <interactant intactId="EBI-10968534">
        <id>P50570-2</id>
    </interactant>
    <interactant intactId="EBI-1046690">
        <id>O60749</id>
        <label>SNX2</label>
    </interactant>
    <organismsDiffer>false</organismsDiffer>
    <experiments>3</experiments>
</comment>
<comment type="interaction">
    <interactant intactId="EBI-10968534">
        <id>P50570-2</id>
    </interactant>
    <interactant intactId="EBI-2481535">
        <id>Q8WV41</id>
        <label>SNX33</label>
    </interactant>
    <organismsDiffer>false</organismsDiffer>
    <experiments>3</experiments>
</comment>
<comment type="interaction">
    <interactant intactId="EBI-10968534">
        <id>P50570-2</id>
    </interactant>
    <interactant intactId="EBI-25845337">
        <id>Q05C28</id>
        <label>SPACA3</label>
    </interactant>
    <organismsDiffer>false</organismsDiffer>
    <experiments>3</experiments>
</comment>
<comment type="interaction">
    <interactant intactId="EBI-10968534">
        <id>P50570-2</id>
    </interactant>
    <interactant intactId="EBI-10696971">
        <id>Q7Z6I5</id>
        <label>SPATA12</label>
    </interactant>
    <organismsDiffer>false</organismsDiffer>
    <experiments>3</experiments>
</comment>
<comment type="interaction">
    <interactant intactId="EBI-10968534">
        <id>P50570-2</id>
    </interactant>
    <interactant intactId="EBI-7082156">
        <id>Q7Z698</id>
        <label>SPRED2</label>
    </interactant>
    <organismsDiffer>false</organismsDiffer>
    <experiments>3</experiments>
</comment>
<comment type="interaction">
    <interactant intactId="EBI-10968534">
        <id>P50570-2</id>
    </interactant>
    <interactant intactId="EBI-714135">
        <id>O75558</id>
        <label>STX11</label>
    </interactant>
    <organismsDiffer>false</organismsDiffer>
    <experiments>3</experiments>
</comment>
<comment type="interaction">
    <interactant intactId="EBI-10968534">
        <id>P50570-2</id>
    </interactant>
    <interactant intactId="EBI-8484990">
        <id>Q8N4C7</id>
        <label>STX19</label>
    </interactant>
    <organismsDiffer>false</organismsDiffer>
    <experiments>3</experiments>
</comment>
<comment type="interaction">
    <interactant intactId="EBI-10968534">
        <id>P50570-2</id>
    </interactant>
    <interactant intactId="EBI-1056740">
        <id>P37802</id>
        <label>TAGLN2</label>
    </interactant>
    <organismsDiffer>false</organismsDiffer>
    <experiments>3</experiments>
</comment>
<comment type="interaction">
    <interactant intactId="EBI-10968534">
        <id>P50570-2</id>
    </interactant>
    <interactant intactId="EBI-2819865">
        <id>O95551</id>
        <label>TDP2</label>
    </interactant>
    <organismsDiffer>false</organismsDiffer>
    <experiments>3</experiments>
</comment>
<comment type="interaction">
    <interactant intactId="EBI-10968534">
        <id>P50570-2</id>
    </interactant>
    <interactant intactId="EBI-12151837">
        <id>P28347-2</id>
        <label>TEAD1</label>
    </interactant>
    <organismsDiffer>false</organismsDiffer>
    <experiments>3</experiments>
</comment>
<comment type="interaction">
    <interactant intactId="EBI-10968534">
        <id>P50570-2</id>
    </interactant>
    <interactant intactId="EBI-2796967">
        <id>Q10587</id>
        <label>TEF</label>
    </interactant>
    <organismsDiffer>false</organismsDiffer>
    <experiments>3</experiments>
</comment>
<comment type="interaction">
    <interactant intactId="EBI-10968534">
        <id>P50570-2</id>
    </interactant>
    <interactant intactId="EBI-4314702">
        <id>Q03403</id>
        <label>TFF2</label>
    </interactant>
    <organismsDiffer>false</organismsDiffer>
    <experiments>3</experiments>
</comment>
<comment type="interaction">
    <interactant intactId="EBI-10968534">
        <id>P50570-2</id>
    </interactant>
    <interactant intactId="EBI-25842075">
        <id>P21980-2</id>
        <label>TGM2</label>
    </interactant>
    <organismsDiffer>false</organismsDiffer>
    <experiments>3</experiments>
</comment>
<comment type="interaction">
    <interactant intactId="EBI-10968534">
        <id>P50570-2</id>
    </interactant>
    <interactant intactId="EBI-10242213">
        <id>Q53EQ6-2</id>
        <label>TIGD5</label>
    </interactant>
    <organismsDiffer>false</organismsDiffer>
    <experiments>3</experiments>
</comment>
<comment type="interaction">
    <interactant intactId="EBI-10968534">
        <id>P50570-2</id>
    </interactant>
    <interactant intactId="EBI-396540">
        <id>Q12888</id>
        <label>TP53BP1</label>
    </interactant>
    <organismsDiffer>false</organismsDiffer>
    <experiments>3</experiments>
</comment>
<comment type="interaction">
    <interactant intactId="EBI-10968534">
        <id>P50570-2</id>
    </interactant>
    <interactant intactId="EBI-3650647">
        <id>Q9BUZ4</id>
        <label>TRAF4</label>
    </interactant>
    <organismsDiffer>false</organismsDiffer>
    <experiments>3</experiments>
</comment>
<comment type="interaction">
    <interactant intactId="EBI-10968534">
        <id>P50570-2</id>
    </interactant>
    <interactant intactId="EBI-21894090">
        <id>Q9NX07-2</id>
        <label>TRNAU1AP</label>
    </interactant>
    <organismsDiffer>false</organismsDiffer>
    <experiments>3</experiments>
</comment>
<comment type="interaction">
    <interactant intactId="EBI-10968534">
        <id>P50570-2</id>
    </interactant>
    <interactant intactId="EBI-9090990">
        <id>Q5W5X9-3</id>
        <label>TTC23</label>
    </interactant>
    <organismsDiffer>false</organismsDiffer>
    <experiments>3</experiments>
</comment>
<comment type="interaction">
    <interactant intactId="EBI-10968534">
        <id>P50570-2</id>
    </interactant>
    <interactant intactId="EBI-594644">
        <id>P10599</id>
        <label>TXN</label>
    </interactant>
    <organismsDiffer>false</organismsDiffer>
    <experiments>3</experiments>
</comment>
<comment type="interaction">
    <interactant intactId="EBI-10968534">
        <id>P50570-2</id>
    </interactant>
    <interactant intactId="EBI-6427899">
        <id>P58304</id>
        <label>VSX2</label>
    </interactant>
    <organismsDiffer>false</organismsDiffer>
    <experiments>3</experiments>
</comment>
<comment type="interaction">
    <interactant intactId="EBI-10968534">
        <id>P50570-2</id>
    </interactant>
    <interactant intactId="EBI-743923">
        <id>O00308</id>
        <label>WWP2</label>
    </interactant>
    <organismsDiffer>false</organismsDiffer>
    <experiments>3</experiments>
</comment>
<comment type="interaction">
    <interactant intactId="EBI-10968534">
        <id>P50570-2</id>
    </interactant>
    <interactant intactId="EBI-5235984">
        <id>Q8NAP3</id>
        <label>ZBTB38</label>
    </interactant>
    <organismsDiffer>false</organismsDiffer>
    <experiments>3</experiments>
</comment>
<comment type="interaction">
    <interactant intactId="EBI-10968534">
        <id>P50570-2</id>
    </interactant>
    <interactant intactId="EBI-524753">
        <id>Q8IUH5</id>
        <label>ZDHHC17</label>
    </interactant>
    <organismsDiffer>false</organismsDiffer>
    <experiments>3</experiments>
</comment>
<comment type="interaction">
    <interactant intactId="EBI-10968534">
        <id>P50570-2</id>
    </interactant>
    <interactant intactId="EBI-25835471">
        <id>Q05CR2</id>
        <label>ZNF248</label>
    </interactant>
    <organismsDiffer>false</organismsDiffer>
    <experiments>3</experiments>
</comment>
<comment type="interaction">
    <interactant intactId="EBI-10968534">
        <id>P50570-2</id>
    </interactant>
    <interactant intactId="EBI-2813661">
        <id>Q8N895</id>
        <label>ZNF366</label>
    </interactant>
    <organismsDiffer>false</organismsDiffer>
    <experiments>3</experiments>
</comment>
<comment type="interaction">
    <interactant intactId="EBI-10968534">
        <id>P50570-2</id>
    </interactant>
    <interactant intactId="EBI-25845021">
        <id>Q14966-2</id>
        <label>ZNF638</label>
    </interactant>
    <organismsDiffer>false</organismsDiffer>
    <experiments>3</experiments>
</comment>
<comment type="interaction">
    <interactant intactId="EBI-10968534">
        <id>P50570-2</id>
    </interactant>
    <interactant intactId="EBI-25845217">
        <id>Q5TEC3</id>
        <label>ZNF697</label>
    </interactant>
    <organismsDiffer>false</organismsDiffer>
    <experiments>3</experiments>
</comment>
<comment type="interaction">
    <interactant intactId="EBI-10968534">
        <id>P50570-2</id>
    </interactant>
    <interactant intactId="EBI-723434">
        <id>Q5JTY5</id>
        <label>ZNG1C</label>
    </interactant>
    <organismsDiffer>false</organismsDiffer>
    <experiments>3</experiments>
</comment>
<comment type="interaction">
    <interactant intactId="EBI-10968534">
        <id>P50570-2</id>
    </interactant>
    <interactant intactId="EBI-25831617">
        <id>B7Z3E8</id>
    </interactant>
    <organismsDiffer>false</organismsDiffer>
    <experiments>3</experiments>
</comment>
<comment type="interaction">
    <interactant intactId="EBI-10968534">
        <id>P50570-2</id>
    </interactant>
    <interactant intactId="EBI-6455001">
        <id>Q99KR7</id>
        <label>Ppif</label>
    </interactant>
    <organismsDiffer>true</organismsDiffer>
    <experiments>3</experiments>
</comment>
<comment type="subcellular location">
    <subcellularLocation>
        <location evidence="11">Cytoplasm</location>
        <location evidence="11">Cytoskeleton</location>
    </subcellularLocation>
    <subcellularLocation>
        <location evidence="11">Cytoplasmic vesicle</location>
        <location evidence="11">Clathrin-coated vesicle</location>
    </subcellularLocation>
    <subcellularLocation>
        <location evidence="20">Cell projection</location>
        <location evidence="20">Uropodium</location>
    </subcellularLocation>
    <subcellularLocation>
        <location evidence="11">Endosome</location>
    </subcellularLocation>
    <subcellularLocation>
        <location evidence="12">Cytoplasm</location>
        <location evidence="12">Cytoskeleton</location>
        <location evidence="12">Microtubule organizing center</location>
        <location evidence="12">Centrosome</location>
    </subcellularLocation>
    <subcellularLocation>
        <location evidence="9">Cytoplasm</location>
        <location evidence="9">Cytoskeleton</location>
        <location evidence="9">Microtubule organizing center</location>
        <location evidence="9">Centrosome</location>
        <location evidence="9">Centriole</location>
    </subcellularLocation>
    <subcellularLocation>
        <location evidence="34">Recycling endosome</location>
    </subcellularLocation>
    <subcellularLocation>
        <location evidence="2">Cell projection</location>
        <location evidence="2">Phagocytic cup</location>
    </subcellularLocation>
    <subcellularLocation>
        <location evidence="2">Cytoplasmic vesicle</location>
        <location evidence="2">Phagosome membrane</location>
        <topology evidence="2">Peripheral membrane protein</topology>
    </subcellularLocation>
    <subcellularLocation>
        <location evidence="2">Cell projection</location>
        <location evidence="2">Podosome</location>
    </subcellularLocation>
    <subcellularLocation>
        <location evidence="1">Cytoplasm</location>
    </subcellularLocation>
    <subcellularLocation>
        <location evidence="1">Cell junction</location>
    </subcellularLocation>
    <subcellularLocation>
        <location evidence="1">Postsynaptic density</location>
    </subcellularLocation>
    <subcellularLocation>
        <location evidence="1">Synapse</location>
        <location evidence="1">Synaptosome</location>
    </subcellularLocation>
    <subcellularLocation>
        <location evidence="1">Midbody</location>
    </subcellularLocation>
    <subcellularLocation>
        <location evidence="1">Membrane</location>
        <location evidence="1">Clathrin-coated pit</location>
    </subcellularLocation>
    <text evidence="1 2 34">Localized in recycling endosomes fragment to release nascent autophagosomes (PubMed:32315611). Co-localizes with PIK3C3 and RAB5A to the nascent phagosome. Localized at focal ahesion site upon induction of focal adhesions and stress-fiber formation, when interacts with SDC4 (By similarity). Exists as a dynamic component of the centrosome. Associates with clathrin-coated vesicles at both the plasma membrane and the trans-Golgi network (TGN) (By similarity).</text>
</comment>
<comment type="alternative products">
    <event type="alternative splicing"/>
    <isoform>
        <id>P50570-1</id>
        <name>1</name>
        <sequence type="displayed"/>
    </isoform>
    <isoform>
        <id>P50570-2</id>
        <name>2</name>
        <sequence type="described" ref="VSP_001325"/>
    </isoform>
    <isoform>
        <id>P50570-3</id>
        <name>3</name>
        <sequence type="described" ref="VSP_044280 VSP_001325"/>
    </isoform>
    <isoform>
        <id>P50570-4</id>
        <name>4</name>
        <sequence type="described" ref="VSP_044280"/>
    </isoform>
    <isoform>
        <id>P50570-5</id>
        <name>5</name>
        <sequence type="described" ref="VSP_047534"/>
    </isoform>
</comment>
<comment type="tissue specificity">
    <text evidence="24 38">Widely expressed (PubMed:7590285). Expressed in skeletal muscle and the peripheral nerve (PubMed:19623537).</text>
</comment>
<comment type="PTM">
    <text evidence="1 2 28 37">Phosphorylation at Ser-848 by GSK3-alpha relieves the inhibition of BIN1 and promotes endocytosis (PubMed:36445308). Phosphorylation at Ser-764 by CDK1 is greatly increased upon mitotic entry (PubMed:20496096). It regulates cytokinesis downstream of calcineurin, and does not affect clathrin-mediated endocytosis (By similarity). Dephosphorylated by calcineurin/PP2 during cytokinesis in a Ca(2+)- and calmodulin-dependent manner (PubMed:20496096). Phosphorylated on tyrosine residues by EGFR and after activation of SRC (By similarity).</text>
</comment>
<comment type="disease" evidence="12 17 18 22 24 25 26 27 30 32 34 36 37">
    <disease id="DI-00252">
        <name>Myopathy, centronuclear, 1</name>
        <acronym>CNM1</acronym>
        <description>A congenital muscle disorder characterized by progressive muscular weakness and wasting involving mainly limb girdle, trunk, and neck muscles. It may also affect distal muscles. Weakness may be present during childhood or adolescence or may not become evident until the third decade of life. Ptosis is a frequent clinical feature. The most prominent histopathologic features include high frequency of centrally located nuclei in muscle fibers not secondary to regeneration, radial arrangement of sarcoplasmic strands around the central nuclei, and predominance and hypotrophy of type 1 fibers.</description>
        <dbReference type="MIM" id="160150"/>
    </disease>
    <text>The disease is caused by variants affecting the gene represented in this entry.</text>
</comment>
<comment type="disease" evidence="31">
    <disease id="DI-03854">
        <name>Lethal congenital contracture syndrome 5</name>
        <acronym>LCCS5</acronym>
        <description>A form of lethal congenital contracture syndrome, an autosomal recessive disorder characterized by degeneration of anterior horn neurons, extreme skeletal muscle atrophy and congenital non-progressive joint contractures. The contractures can involve the upper or lower limbs and/or the vertebral column, leading to various degrees of flexion or extension limitations evident at birth.</description>
        <dbReference type="MIM" id="615368"/>
    </disease>
    <text>The disease is caused by variants affecting the gene represented in this entry.</text>
</comment>
<comment type="disease" evidence="11 24">
    <disease id="DI-00264">
        <name>Charcot-Marie-Tooth disease, dominant intermediate B</name>
        <acronym>CMTDIB</acronym>
        <description>A form of Charcot-Marie-Tooth disease, a disorder of the peripheral nervous system, characterized by progressive weakness and atrophy, initially of the peroneal muscles and later of the distal muscles of the arms. The dominant intermediate type B is characterized by clinical and pathologic features intermediate between demyelinating and axonal peripheral neuropathies, and motor median nerve conduction velocities ranging from 25 to 45 m/sec.</description>
        <dbReference type="MIM" id="606482"/>
    </disease>
    <text>The disease is caused by variants affecting the gene represented in this entry.</text>
</comment>
<comment type="disease" evidence="15 21">
    <disease id="DI-03481">
        <name>Charcot-Marie-Tooth disease, axonal, type 2M</name>
        <acronym>CMT2M</acronym>
        <description>An axonal form of Charcot-Marie-Tooth disease, a disorder of the peripheral nervous system, characterized by progressive weakness and atrophy, initially of the peroneal muscles and later of the distal muscles of the arms. Charcot-Marie-Tooth disease is classified in two main groups on the basis of electrophysiologic properties and histopathology: primary peripheral demyelinating neuropathies (designated CMT1 when they are dominantly inherited) and primary peripheral axonal neuropathies (CMT2). Neuropathies of the CMT2 group are characterized by signs of axonal degeneration in the absence of obvious myelin alterations, normal or slightly reduced nerve conduction velocities, and progressive distal muscle weakness and atrophy.</description>
        <dbReference type="MIM" id="606482"/>
    </disease>
    <text>The disease is caused by variants affecting the gene represented in this entry.</text>
</comment>
<comment type="miscellaneous">
    <text>Overexpression of CNM- and CMT-related DNM2 mutants in COS7 cells, whatever the mutated domain, led to a reduction in clathrin-mediated receptor endocytosis associated with MAPK ERK-1 and ERK-2 impairment. The membrane trafficking impairment process may represent a common pathophysiological pathway in the autosomal forms of CNM DNM2-CMT neuropathy.</text>
</comment>
<comment type="similarity">
    <text evidence="6">Belongs to the TRAFAC class dynamin-like GTPase superfamily. Dynamin/Fzo/YdjA family.</text>
</comment>
<evidence type="ECO:0000250" key="1">
    <source>
        <dbReference type="UniProtKB" id="P39052"/>
    </source>
</evidence>
<evidence type="ECO:0000250" key="2">
    <source>
        <dbReference type="UniProtKB" id="P39054"/>
    </source>
</evidence>
<evidence type="ECO:0000250" key="3">
    <source>
        <dbReference type="UniProtKB" id="Q05193"/>
    </source>
</evidence>
<evidence type="ECO:0000255" key="4">
    <source>
        <dbReference type="PROSITE-ProRule" id="PRU00145"/>
    </source>
</evidence>
<evidence type="ECO:0000255" key="5">
    <source>
        <dbReference type="PROSITE-ProRule" id="PRU00720"/>
    </source>
</evidence>
<evidence type="ECO:0000255" key="6">
    <source>
        <dbReference type="PROSITE-ProRule" id="PRU01055"/>
    </source>
</evidence>
<evidence type="ECO:0000256" key="7">
    <source>
        <dbReference type="SAM" id="MobiDB-lite"/>
    </source>
</evidence>
<evidence type="ECO:0000269" key="8">
    <source>
    </source>
</evidence>
<evidence type="ECO:0000269" key="9">
    <source>
    </source>
</evidence>
<evidence type="ECO:0000269" key="10">
    <source>
    </source>
</evidence>
<evidence type="ECO:0000269" key="11">
    <source>
    </source>
</evidence>
<evidence type="ECO:0000269" key="12">
    <source>
    </source>
</evidence>
<evidence type="ECO:0000269" key="13">
    <source>
    </source>
</evidence>
<evidence type="ECO:0000269" key="14">
    <source>
    </source>
</evidence>
<evidence type="ECO:0000269" key="15">
    <source>
    </source>
</evidence>
<evidence type="ECO:0000269" key="16">
    <source>
    </source>
</evidence>
<evidence type="ECO:0000269" key="17">
    <source>
    </source>
</evidence>
<evidence type="ECO:0000269" key="18">
    <source>
    </source>
</evidence>
<evidence type="ECO:0000269" key="19">
    <source>
    </source>
</evidence>
<evidence type="ECO:0000269" key="20">
    <source>
    </source>
</evidence>
<evidence type="ECO:0000269" key="21">
    <source>
    </source>
</evidence>
<evidence type="ECO:0000269" key="22">
    <source>
    </source>
</evidence>
<evidence type="ECO:0000269" key="23">
    <source>
    </source>
</evidence>
<evidence type="ECO:0000269" key="24">
    <source>
    </source>
</evidence>
<evidence type="ECO:0000269" key="25">
    <source>
    </source>
</evidence>
<evidence type="ECO:0000269" key="26">
    <source>
    </source>
</evidence>
<evidence type="ECO:0000269" key="27">
    <source>
    </source>
</evidence>
<evidence type="ECO:0000269" key="28">
    <source>
    </source>
</evidence>
<evidence type="ECO:0000269" key="29">
    <source>
    </source>
</evidence>
<evidence type="ECO:0000269" key="30">
    <source>
    </source>
</evidence>
<evidence type="ECO:0000269" key="31">
    <source>
    </source>
</evidence>
<evidence type="ECO:0000269" key="32">
    <source>
    </source>
</evidence>
<evidence type="ECO:0000269" key="33">
    <source>
    </source>
</evidence>
<evidence type="ECO:0000269" key="34">
    <source>
    </source>
</evidence>
<evidence type="ECO:0000269" key="35">
    <source>
    </source>
</evidence>
<evidence type="ECO:0000269" key="36">
    <source>
    </source>
</evidence>
<evidence type="ECO:0000269" key="37">
    <source>
    </source>
</evidence>
<evidence type="ECO:0000269" key="38">
    <source>
    </source>
</evidence>
<evidence type="ECO:0000303" key="39">
    <source>
    </source>
</evidence>
<evidence type="ECO:0000303" key="40">
    <source>
    </source>
</evidence>
<evidence type="ECO:0000303" key="41">
    <source>
    </source>
</evidence>
<evidence type="ECO:0000303" key="42">
    <source>
    </source>
</evidence>
<evidence type="ECO:0000303" key="43">
    <source>
    </source>
</evidence>
<evidence type="ECO:0000305" key="44"/>
<evidence type="ECO:0000305" key="45">
    <source>
    </source>
</evidence>
<evidence type="ECO:0000312" key="46">
    <source>
        <dbReference type="HGNC" id="HGNC:2974"/>
    </source>
</evidence>
<evidence type="ECO:0007744" key="47">
    <source>
    </source>
</evidence>
<evidence type="ECO:0007744" key="48">
    <source>
    </source>
</evidence>
<evidence type="ECO:0007829" key="49">
    <source>
        <dbReference type="PDB" id="2YS1"/>
    </source>
</evidence>
<organism>
    <name type="scientific">Homo sapiens</name>
    <name type="common">Human</name>
    <dbReference type="NCBI Taxonomy" id="9606"/>
    <lineage>
        <taxon>Eukaryota</taxon>
        <taxon>Metazoa</taxon>
        <taxon>Chordata</taxon>
        <taxon>Craniata</taxon>
        <taxon>Vertebrata</taxon>
        <taxon>Euteleostomi</taxon>
        <taxon>Mammalia</taxon>
        <taxon>Eutheria</taxon>
        <taxon>Euarchontoglires</taxon>
        <taxon>Primates</taxon>
        <taxon>Haplorrhini</taxon>
        <taxon>Catarrhini</taxon>
        <taxon>Hominidae</taxon>
        <taxon>Homo</taxon>
    </lineage>
</organism>
<keyword id="KW-0002">3D-structure</keyword>
<keyword id="KW-0007">Acetylation</keyword>
<keyword id="KW-0025">Alternative splicing</keyword>
<keyword id="KW-0965">Cell junction</keyword>
<keyword id="KW-0966">Cell projection</keyword>
<keyword id="KW-0144">Charcot-Marie-Tooth disease</keyword>
<keyword id="KW-0168">Coated pit</keyword>
<keyword id="KW-0963">Cytoplasm</keyword>
<keyword id="KW-0968">Cytoplasmic vesicle</keyword>
<keyword id="KW-0206">Cytoskeleton</keyword>
<keyword id="KW-0225">Disease variant</keyword>
<keyword id="KW-0254">Endocytosis</keyword>
<keyword id="KW-0967">Endosome</keyword>
<keyword id="KW-0342">GTP-binding</keyword>
<keyword id="KW-0378">Hydrolase</keyword>
<keyword id="KW-0472">Membrane</keyword>
<keyword id="KW-0493">Microtubule</keyword>
<keyword id="KW-0505">Motor protein</keyword>
<keyword id="KW-0523">Neurodegeneration</keyword>
<keyword id="KW-0622">Neuropathy</keyword>
<keyword id="KW-0547">Nucleotide-binding</keyword>
<keyword id="KW-0581">Phagocytosis</keyword>
<keyword id="KW-0597">Phosphoprotein</keyword>
<keyword id="KW-1267">Proteomics identification</keyword>
<keyword id="KW-1185">Reference proteome</keyword>
<keyword id="KW-0770">Synapse</keyword>
<keyword id="KW-0771">Synaptosome</keyword>
<proteinExistence type="evidence at protein level"/>
<gene>
    <name evidence="46" type="primary">DNM2</name>
    <name type="synonym">DYN2</name>
</gene>
<sequence length="870" mass="98064">MGNRGMEELIPLVNKLQDAFSSIGQSCHLDLPQIAVVGGQSAGKSSVLENFVGRDFLPRGSGIVTRRPLILQLIFSKTEHAEFLHCKSKKFTDFDEVRQEIEAETDRVTGTNKGISPVPINLRVYSPHVLNLTLIDLPGITKVPVGDQPPDIEYQIKDMILQFISRESSLILAVTPANMDLANSDALKLAKEVDPQGLRTIGVITKLDLMDEGTDARDVLENKLLPLRRGYIGVVNRSQKDIEGKKDIRAALAAERKFFLSHPAYRHMADRMGTPHLQKTLNQQLTNHIRESLPALRSKLQSQLLSLEKEVEEYKNFRPDDPTRKTKALLQMVQQFGVDFEKRIEGSGDQVDTLELSGGARINRIFHERFPFELVKMEFDEKDLRREISYAIKNIHGVRTGLFTPDLAFEAIVKKQVVKLKEPCLKCVDLVIQELINTVRQCTSKLSSYPRLREETERIVTTYIREREGRTKDQILLLIDIEQSYINTNHEDFIGFANAQQRSTQLNKKRAIPNQGEILVIRRGWLTINNISLMKGGSKEYWFVLTAESLSWYKDEEEKEKKYMLPLDNLKIRDVEKGFMSNKHVFAIFNTEQRNVYKDLRQIELACDSQEDVDSWKASFLRAGVYPEKDQAENEDGAQENTFSMDPQLERQVETIRNLVDSYVAIINKSIRDLMPKTIMHLMINNTKAFIHHELLAYLYSSADQSSLMEESADQAQRRDDMLRMYHALKEALNIIGDISTSTVSTPVPPPVDDTWLQSASSHSPTPQRRPVSSIHPPGRPPAVRGPTPGPPLIPVPVGAAASFSAPPIPSRPGPQSVFANSDLFPAPPQIPSRPVRIPPGIPPGVPSRRPPAAPSRPTIIRPAEPSLLD</sequence>